<proteinExistence type="evidence at protein level"/>
<organism>
    <name type="scientific">Homo sapiens</name>
    <name type="common">Human</name>
    <dbReference type="NCBI Taxonomy" id="9606"/>
    <lineage>
        <taxon>Eukaryota</taxon>
        <taxon>Metazoa</taxon>
        <taxon>Chordata</taxon>
        <taxon>Craniata</taxon>
        <taxon>Vertebrata</taxon>
        <taxon>Euteleostomi</taxon>
        <taxon>Mammalia</taxon>
        <taxon>Eutheria</taxon>
        <taxon>Euarchontoglires</taxon>
        <taxon>Primates</taxon>
        <taxon>Haplorrhini</taxon>
        <taxon>Catarrhini</taxon>
        <taxon>Hominidae</taxon>
        <taxon>Homo</taxon>
    </lineage>
</organism>
<protein>
    <recommendedName>
        <fullName>DNA (cytosine-5)-methyltransferase 3B</fullName>
        <shortName>Dnmt3b</shortName>
        <ecNumber>2.1.1.37</ecNumber>
    </recommendedName>
    <alternativeName>
        <fullName>DNA methyltransferase HsaIIIB</fullName>
        <shortName>DNA MTase HsaIIIB</shortName>
        <shortName>M.HsaIIIB</shortName>
    </alternativeName>
</protein>
<reference key="1">
    <citation type="journal article" date="1999" name="Gene">
        <title>Cloning, expression and chromosome locations of the human DNMT3 gene family.</title>
        <authorList>
            <person name="Xie S."/>
            <person name="Wang Z."/>
            <person name="Okano M."/>
            <person name="Nogami M."/>
            <person name="Li Y."/>
            <person name="He W.-W."/>
            <person name="Okumura K."/>
            <person name="Li E."/>
        </authorList>
    </citation>
    <scope>NUCLEOTIDE SEQUENCE [MRNA] (ISOFORMS 1; 2 AND 3)</scope>
    <source>
        <tissue>Fetal testis</tissue>
        <tissue>Small intestine</tissue>
    </source>
</reference>
<reference key="2">
    <citation type="journal article" date="1999" name="Nature">
        <title>Chromosome instability and immunodeficiency syndrome caused by mutations in a DNA methyltransferase gene.</title>
        <authorList>
            <person name="Xu G.-L."/>
            <person name="Bestor T.H."/>
            <person name="Bourc'his D."/>
            <person name="Hsieh C.-L."/>
            <person name="Tommerup N."/>
            <person name="Bugge M."/>
            <person name="Hulten M."/>
            <person name="Qu X."/>
            <person name="Russo J.J."/>
            <person name="Viegas-Pequignot E."/>
        </authorList>
    </citation>
    <scope>NUCLEOTIDE SEQUENCE [MRNA] (ISOFORM 6)</scope>
    <scope>VARIANTS ICF1 SER-663; GLY-726; GLY-817 AND MET-818</scope>
    <source>
        <tissue>Testis</tissue>
    </source>
</reference>
<reference key="3">
    <citation type="submission" date="2000-12" db="EMBL/GenBank/DDBJ databases">
        <title>Cloning, expression and characterization of human DNMT3 genes.</title>
        <authorList>
            <person name="Ni J."/>
            <person name="Pradhan S."/>
            <person name="Roberts R.J."/>
        </authorList>
    </citation>
    <scope>NUCLEOTIDE SEQUENCE [MRNA] (ISOFORM 1)</scope>
</reference>
<reference key="4">
    <citation type="journal article" date="2004" name="Nat. Genet.">
        <title>Complete sequencing and characterization of 21,243 full-length human cDNAs.</title>
        <authorList>
            <person name="Ota T."/>
            <person name="Suzuki Y."/>
            <person name="Nishikawa T."/>
            <person name="Otsuki T."/>
            <person name="Sugiyama T."/>
            <person name="Irie R."/>
            <person name="Wakamatsu A."/>
            <person name="Hayashi K."/>
            <person name="Sato H."/>
            <person name="Nagai K."/>
            <person name="Kimura K."/>
            <person name="Makita H."/>
            <person name="Sekine M."/>
            <person name="Obayashi M."/>
            <person name="Nishi T."/>
            <person name="Shibahara T."/>
            <person name="Tanaka T."/>
            <person name="Ishii S."/>
            <person name="Yamamoto J."/>
            <person name="Saito K."/>
            <person name="Kawai Y."/>
            <person name="Isono Y."/>
            <person name="Nakamura Y."/>
            <person name="Nagahari K."/>
            <person name="Murakami K."/>
            <person name="Yasuda T."/>
            <person name="Iwayanagi T."/>
            <person name="Wagatsuma M."/>
            <person name="Shiratori A."/>
            <person name="Sudo H."/>
            <person name="Hosoiri T."/>
            <person name="Kaku Y."/>
            <person name="Kodaira H."/>
            <person name="Kondo H."/>
            <person name="Sugawara M."/>
            <person name="Takahashi M."/>
            <person name="Kanda K."/>
            <person name="Yokoi T."/>
            <person name="Furuya T."/>
            <person name="Kikkawa E."/>
            <person name="Omura Y."/>
            <person name="Abe K."/>
            <person name="Kamihara K."/>
            <person name="Katsuta N."/>
            <person name="Sato K."/>
            <person name="Tanikawa M."/>
            <person name="Yamazaki M."/>
            <person name="Ninomiya K."/>
            <person name="Ishibashi T."/>
            <person name="Yamashita H."/>
            <person name="Murakawa K."/>
            <person name="Fujimori K."/>
            <person name="Tanai H."/>
            <person name="Kimata M."/>
            <person name="Watanabe M."/>
            <person name="Hiraoka S."/>
            <person name="Chiba Y."/>
            <person name="Ishida S."/>
            <person name="Ono Y."/>
            <person name="Takiguchi S."/>
            <person name="Watanabe S."/>
            <person name="Yosida M."/>
            <person name="Hotuta T."/>
            <person name="Kusano J."/>
            <person name="Kanehori K."/>
            <person name="Takahashi-Fujii A."/>
            <person name="Hara H."/>
            <person name="Tanase T.-O."/>
            <person name="Nomura Y."/>
            <person name="Togiya S."/>
            <person name="Komai F."/>
            <person name="Hara R."/>
            <person name="Takeuchi K."/>
            <person name="Arita M."/>
            <person name="Imose N."/>
            <person name="Musashino K."/>
            <person name="Yuuki H."/>
            <person name="Oshima A."/>
            <person name="Sasaki N."/>
            <person name="Aotsuka S."/>
            <person name="Yoshikawa Y."/>
            <person name="Matsunawa H."/>
            <person name="Ichihara T."/>
            <person name="Shiohata N."/>
            <person name="Sano S."/>
            <person name="Moriya S."/>
            <person name="Momiyama H."/>
            <person name="Satoh N."/>
            <person name="Takami S."/>
            <person name="Terashima Y."/>
            <person name="Suzuki O."/>
            <person name="Nakagawa S."/>
            <person name="Senoh A."/>
            <person name="Mizoguchi H."/>
            <person name="Goto Y."/>
            <person name="Shimizu F."/>
            <person name="Wakebe H."/>
            <person name="Hishigaki H."/>
            <person name="Watanabe T."/>
            <person name="Sugiyama A."/>
            <person name="Takemoto M."/>
            <person name="Kawakami B."/>
            <person name="Yamazaki M."/>
            <person name="Watanabe K."/>
            <person name="Kumagai A."/>
            <person name="Itakura S."/>
            <person name="Fukuzumi Y."/>
            <person name="Fujimori Y."/>
            <person name="Komiyama M."/>
            <person name="Tashiro H."/>
            <person name="Tanigami A."/>
            <person name="Fujiwara T."/>
            <person name="Ono T."/>
            <person name="Yamada K."/>
            <person name="Fujii Y."/>
            <person name="Ozaki K."/>
            <person name="Hirao M."/>
            <person name="Ohmori Y."/>
            <person name="Kawabata A."/>
            <person name="Hikiji T."/>
            <person name="Kobatake N."/>
            <person name="Inagaki H."/>
            <person name="Ikema Y."/>
            <person name="Okamoto S."/>
            <person name="Okitani R."/>
            <person name="Kawakami T."/>
            <person name="Noguchi S."/>
            <person name="Itoh T."/>
            <person name="Shigeta K."/>
            <person name="Senba T."/>
            <person name="Matsumura K."/>
            <person name="Nakajima Y."/>
            <person name="Mizuno T."/>
            <person name="Morinaga M."/>
            <person name="Sasaki M."/>
            <person name="Togashi T."/>
            <person name="Oyama M."/>
            <person name="Hata H."/>
            <person name="Watanabe M."/>
            <person name="Komatsu T."/>
            <person name="Mizushima-Sugano J."/>
            <person name="Satoh T."/>
            <person name="Shirai Y."/>
            <person name="Takahashi Y."/>
            <person name="Nakagawa K."/>
            <person name="Okumura K."/>
            <person name="Nagase T."/>
            <person name="Nomura N."/>
            <person name="Kikuchi H."/>
            <person name="Masuho Y."/>
            <person name="Yamashita R."/>
            <person name="Nakai K."/>
            <person name="Yada T."/>
            <person name="Nakamura Y."/>
            <person name="Ohara O."/>
            <person name="Isogai T."/>
            <person name="Sugano S."/>
        </authorList>
    </citation>
    <scope>NUCLEOTIDE SEQUENCE [LARGE SCALE MRNA] (ISOFORMS 7 AND 8)</scope>
    <source>
        <tissue>Brain</tissue>
    </source>
</reference>
<reference key="5">
    <citation type="journal article" date="2001" name="Nature">
        <title>The DNA sequence and comparative analysis of human chromosome 20.</title>
        <authorList>
            <person name="Deloukas P."/>
            <person name="Matthews L.H."/>
            <person name="Ashurst J.L."/>
            <person name="Burton J."/>
            <person name="Gilbert J.G.R."/>
            <person name="Jones M."/>
            <person name="Stavrides G."/>
            <person name="Almeida J.P."/>
            <person name="Babbage A.K."/>
            <person name="Bagguley C.L."/>
            <person name="Bailey J."/>
            <person name="Barlow K.F."/>
            <person name="Bates K.N."/>
            <person name="Beard L.M."/>
            <person name="Beare D.M."/>
            <person name="Beasley O.P."/>
            <person name="Bird C.P."/>
            <person name="Blakey S.E."/>
            <person name="Bridgeman A.M."/>
            <person name="Brown A.J."/>
            <person name="Buck D."/>
            <person name="Burrill W.D."/>
            <person name="Butler A.P."/>
            <person name="Carder C."/>
            <person name="Carter N.P."/>
            <person name="Chapman J.C."/>
            <person name="Clamp M."/>
            <person name="Clark G."/>
            <person name="Clark L.N."/>
            <person name="Clark S.Y."/>
            <person name="Clee C.M."/>
            <person name="Clegg S."/>
            <person name="Cobley V.E."/>
            <person name="Collier R.E."/>
            <person name="Connor R.E."/>
            <person name="Corby N.R."/>
            <person name="Coulson A."/>
            <person name="Coville G.J."/>
            <person name="Deadman R."/>
            <person name="Dhami P.D."/>
            <person name="Dunn M."/>
            <person name="Ellington A.G."/>
            <person name="Frankland J.A."/>
            <person name="Fraser A."/>
            <person name="French L."/>
            <person name="Garner P."/>
            <person name="Grafham D.V."/>
            <person name="Griffiths C."/>
            <person name="Griffiths M.N.D."/>
            <person name="Gwilliam R."/>
            <person name="Hall R.E."/>
            <person name="Hammond S."/>
            <person name="Harley J.L."/>
            <person name="Heath P.D."/>
            <person name="Ho S."/>
            <person name="Holden J.L."/>
            <person name="Howden P.J."/>
            <person name="Huckle E."/>
            <person name="Hunt A.R."/>
            <person name="Hunt S.E."/>
            <person name="Jekosch K."/>
            <person name="Johnson C.M."/>
            <person name="Johnson D."/>
            <person name="Kay M.P."/>
            <person name="Kimberley A.M."/>
            <person name="King A."/>
            <person name="Knights A."/>
            <person name="Laird G.K."/>
            <person name="Lawlor S."/>
            <person name="Lehvaeslaiho M.H."/>
            <person name="Leversha M.A."/>
            <person name="Lloyd C."/>
            <person name="Lloyd D.M."/>
            <person name="Lovell J.D."/>
            <person name="Marsh V.L."/>
            <person name="Martin S.L."/>
            <person name="McConnachie L.J."/>
            <person name="McLay K."/>
            <person name="McMurray A.A."/>
            <person name="Milne S.A."/>
            <person name="Mistry D."/>
            <person name="Moore M.J.F."/>
            <person name="Mullikin J.C."/>
            <person name="Nickerson T."/>
            <person name="Oliver K."/>
            <person name="Parker A."/>
            <person name="Patel R."/>
            <person name="Pearce T.A.V."/>
            <person name="Peck A.I."/>
            <person name="Phillimore B.J.C.T."/>
            <person name="Prathalingam S.R."/>
            <person name="Plumb R.W."/>
            <person name="Ramsay H."/>
            <person name="Rice C.M."/>
            <person name="Ross M.T."/>
            <person name="Scott C.E."/>
            <person name="Sehra H.K."/>
            <person name="Shownkeen R."/>
            <person name="Sims S."/>
            <person name="Skuce C.D."/>
            <person name="Smith M.L."/>
            <person name="Soderlund C."/>
            <person name="Steward C.A."/>
            <person name="Sulston J.E."/>
            <person name="Swann R.M."/>
            <person name="Sycamore N."/>
            <person name="Taylor R."/>
            <person name="Tee L."/>
            <person name="Thomas D.W."/>
            <person name="Thorpe A."/>
            <person name="Tracey A."/>
            <person name="Tromans A.C."/>
            <person name="Vaudin M."/>
            <person name="Wall M."/>
            <person name="Wallis J.M."/>
            <person name="Whitehead S.L."/>
            <person name="Whittaker P."/>
            <person name="Willey D.L."/>
            <person name="Williams L."/>
            <person name="Williams S.A."/>
            <person name="Wilming L."/>
            <person name="Wray P.W."/>
            <person name="Hubbard T."/>
            <person name="Durbin R.M."/>
            <person name="Bentley D.R."/>
            <person name="Beck S."/>
            <person name="Rogers J."/>
        </authorList>
    </citation>
    <scope>NUCLEOTIDE SEQUENCE [LARGE SCALE GENOMIC DNA]</scope>
</reference>
<reference key="6">
    <citation type="submission" date="2005-09" db="EMBL/GenBank/DDBJ databases">
        <authorList>
            <person name="Mural R.J."/>
            <person name="Istrail S."/>
            <person name="Sutton G.G."/>
            <person name="Florea L."/>
            <person name="Halpern A.L."/>
            <person name="Mobarry C.M."/>
            <person name="Lippert R."/>
            <person name="Walenz B."/>
            <person name="Shatkay H."/>
            <person name="Dew I."/>
            <person name="Miller J.R."/>
            <person name="Flanigan M.J."/>
            <person name="Edwards N.J."/>
            <person name="Bolanos R."/>
            <person name="Fasulo D."/>
            <person name="Halldorsson B.V."/>
            <person name="Hannenhalli S."/>
            <person name="Turner R."/>
            <person name="Yooseph S."/>
            <person name="Lu F."/>
            <person name="Nusskern D.R."/>
            <person name="Shue B.C."/>
            <person name="Zheng X.H."/>
            <person name="Zhong F."/>
            <person name="Delcher A.L."/>
            <person name="Huson D.H."/>
            <person name="Kravitz S.A."/>
            <person name="Mouchard L."/>
            <person name="Reinert K."/>
            <person name="Remington K.A."/>
            <person name="Clark A.G."/>
            <person name="Waterman M.S."/>
            <person name="Eichler E.E."/>
            <person name="Adams M.D."/>
            <person name="Hunkapiller M.W."/>
            <person name="Myers E.W."/>
            <person name="Venter J.C."/>
        </authorList>
    </citation>
    <scope>NUCLEOTIDE SEQUENCE [LARGE SCALE GENOMIC DNA]</scope>
</reference>
<reference key="7">
    <citation type="journal article" date="1999" name="Nucleic Acids Res.">
        <title>The human DNA methyltransferases (DNMTs) 1, 3a and 3b: coordinate mRNA expression in normal tissues and overexpression in tumors.</title>
        <authorList>
            <person name="Robertson K.D."/>
            <person name="Uzvolgyi E."/>
            <person name="Liang G."/>
            <person name="Talmadge C."/>
            <person name="Sumegi J."/>
            <person name="Gonzales F.A."/>
            <person name="Jones P.A."/>
        </authorList>
    </citation>
    <scope>NUCLEOTIDE SEQUENCE [MRNA] OF 636-853 (ISOFORMS 1; 4 AND 5)</scope>
    <source>
        <tissue>Testis</tissue>
    </source>
</reference>
<reference key="8">
    <citation type="journal article" date="2001" name="Biochem. Biophys. Res. Commun.">
        <title>Dnmt3b, de novo DNA methyltransferase, interacts with SUMO-1 and Ubc9 through its N-terminal region and is subject to modification by SUMO-1.</title>
        <authorList>
            <person name="Kang E.S."/>
            <person name="Park C.W."/>
            <person name="Chung J.H."/>
        </authorList>
    </citation>
    <scope>INTERACTION WITH UBL1 AND UBE2I9</scope>
    <scope>SUMOYLATION</scope>
    <scope>SUBCELLULAR LOCATION</scope>
</reference>
<reference key="9">
    <citation type="journal article" date="2002" name="EMBO J.">
        <title>Co-operation and communication between the human maintenance and de novo DNA (cytosine-5) methyltransferases.</title>
        <authorList>
            <person name="Kim G.-D."/>
            <person name="Ni J."/>
            <person name="Kelesoglu N."/>
            <person name="Roberts R.J."/>
            <person name="Pradhan S."/>
        </authorList>
    </citation>
    <scope>INTERACTION WITH DNMT1 AND DNMT3A</scope>
    <scope>SUBCELLULAR LOCATION</scope>
</reference>
<reference key="10">
    <citation type="journal article" date="2006" name="J. Biol. Chem.">
        <title>The histone methyltransferase SETDB1 and the DNA methyltransferase DNMT3A interact directly and localize to promoters silenced in cancer cells.</title>
        <authorList>
            <person name="Li H."/>
            <person name="Rauch T."/>
            <person name="Chen Z.-X."/>
            <person name="Szabo P.E."/>
            <person name="Riggs A.D."/>
            <person name="Pfeifer G.P."/>
        </authorList>
    </citation>
    <scope>INTERACTION WITH SETDB1</scope>
</reference>
<reference key="11">
    <citation type="journal article" date="2006" name="Nature">
        <title>The Polycomb group protein EZH2 directly controls DNA methylation.</title>
        <authorList>
            <person name="Vire E."/>
            <person name="Brenner C."/>
            <person name="Deplus R."/>
            <person name="Blanchon L."/>
            <person name="Fraga M."/>
            <person name="Didelot C."/>
            <person name="Morey L."/>
            <person name="Van Eynde A."/>
            <person name="Bernard D."/>
            <person name="Vanderwinden J.-M."/>
            <person name="Bollen M."/>
            <person name="Esteller M."/>
            <person name="Di Croce L."/>
            <person name="de Launoit Y."/>
            <person name="Fuks F."/>
        </authorList>
    </citation>
    <scope>FUNCTION</scope>
    <scope>INTERACTION WITH THE PRC2/EED-EZH2 COMPLEX</scope>
</reference>
<reference key="12">
    <citation type="journal article" date="2006" name="Nature">
        <authorList>
            <person name="Vire E."/>
            <person name="Brenner C."/>
            <person name="Deplus R."/>
            <person name="Blanchon L."/>
            <person name="Fraga M."/>
            <person name="Didelot C."/>
            <person name="Morey L."/>
            <person name="Van Eynde A."/>
            <person name="Bernard D."/>
            <person name="Vanderwinden J.-M."/>
            <person name="Bollen M."/>
            <person name="Esteller M."/>
            <person name="Di Croce L."/>
            <person name="de Launoit Y."/>
            <person name="Fuks F."/>
        </authorList>
    </citation>
    <scope>ERRATUM OF PUBMED:16357870</scope>
</reference>
<reference key="13">
    <citation type="journal article" date="2007" name="Biochem. Biophys. Res. Commun.">
        <title>Zinc-fingers and homeoboxes 1 (ZHX1) binds DNA methyltransferase (DNMT) 3B to enhance DNMT3B-mediated transcriptional repression.</title>
        <authorList>
            <person name="Kim S.H."/>
            <person name="Park J."/>
            <person name="Choi M.C."/>
            <person name="Kim H.P."/>
            <person name="Park J.H."/>
            <person name="Jung Y."/>
            <person name="Lee J.H."/>
            <person name="Oh D.Y."/>
            <person name="Im S.A."/>
            <person name="Bang Y.J."/>
            <person name="Kim T.Y."/>
        </authorList>
    </citation>
    <scope>FUNCTION</scope>
    <scope>INTERACTION WITH ZHX1</scope>
</reference>
<reference key="14">
    <citation type="journal article" date="2007" name="Nat. Genet.">
        <title>Polycomb-mediated methylation on Lys27 of histone H3 pre-marks genes for de novo methylation in cancer.</title>
        <authorList>
            <person name="Schlesinger Y."/>
            <person name="Straussman R."/>
            <person name="Keshet I."/>
            <person name="Farkash S."/>
            <person name="Hecht M."/>
            <person name="Zimmerman J."/>
            <person name="Eden E."/>
            <person name="Yakhini Z."/>
            <person name="Ben-Shushan E."/>
            <person name="Reubinoff B.E."/>
            <person name="Bergman Y."/>
            <person name="Simon I."/>
            <person name="Cedar H."/>
        </authorList>
    </citation>
    <scope>DE NOVO DNA METHYLATION OF TARGET GENES</scope>
</reference>
<reference key="15">
    <citation type="journal article" date="2008" name="Cancer Res.">
        <title>DNA methyltransferase 1 and 3B activate BAG-1 expression via recruitment of CTCFL/BORIS and modulation of promoter histone methylation.</title>
        <authorList>
            <person name="Sun L."/>
            <person name="Huang L."/>
            <person name="Nguyen P."/>
            <person name="Bisht K.S."/>
            <person name="Bar-Sela G."/>
            <person name="Ho A.S."/>
            <person name="Bradbury C.M."/>
            <person name="Yu W."/>
            <person name="Cui H."/>
            <person name="Lee S."/>
            <person name="Trepel J.B."/>
            <person name="Feinberg A.P."/>
            <person name="Gius D."/>
        </authorList>
    </citation>
    <scope>FUNCTION</scope>
</reference>
<reference key="16">
    <citation type="journal article" date="2008" name="Int. J. Biochem. Cell Biol.">
        <title>DNA methyltransferase 3B acts as a co-repressor of the human polycomb protein hPc2 to repress fibroblast growth factor receptor 3 transcription.</title>
        <authorList>
            <person name="Kim S.-H."/>
            <person name="Park J."/>
            <person name="Choi M.-C."/>
            <person name="Park J.-H."/>
            <person name="Kim H.-P."/>
            <person name="Lee J.-H."/>
            <person name="Oh D.-Y."/>
            <person name="Im S.-A."/>
            <person name="Bang Y.-J."/>
            <person name="Kim T.-Y."/>
        </authorList>
    </citation>
    <scope>FUNCTION</scope>
</reference>
<reference key="17">
    <citation type="journal article" date="2010" name="Sci. Signal.">
        <title>Quantitative phosphoproteomics reveals widespread full phosphorylation site occupancy during mitosis.</title>
        <authorList>
            <person name="Olsen J.V."/>
            <person name="Vermeulen M."/>
            <person name="Santamaria A."/>
            <person name="Kumar C."/>
            <person name="Miller M.L."/>
            <person name="Jensen L.J."/>
            <person name="Gnad F."/>
            <person name="Cox J."/>
            <person name="Jensen T.S."/>
            <person name="Nigg E.A."/>
            <person name="Brunak S."/>
            <person name="Mann M."/>
        </authorList>
    </citation>
    <scope>PHOSPHORYLATION [LARGE SCALE ANALYSIS] AT SER-136</scope>
    <scope>IDENTIFICATION BY MASS SPECTROMETRY [LARGE SCALE ANALYSIS]</scope>
    <source>
        <tissue>Cervix carcinoma</tissue>
    </source>
</reference>
<reference key="18">
    <citation type="journal article" date="2011" name="Sci. Signal.">
        <title>System-wide temporal characterization of the proteome and phosphoproteome of human embryonic stem cell differentiation.</title>
        <authorList>
            <person name="Rigbolt K.T."/>
            <person name="Prokhorova T.A."/>
            <person name="Akimov V."/>
            <person name="Henningsen J."/>
            <person name="Johansen P.T."/>
            <person name="Kratchmarova I."/>
            <person name="Kassem M."/>
            <person name="Mann M."/>
            <person name="Olsen J.V."/>
            <person name="Blagoev B."/>
        </authorList>
    </citation>
    <scope>PHOSPHORYLATION [LARGE SCALE ANALYSIS] AT SER-82; THR-96; SER-100; SER-110; SER-136; SER-195; SER-202 AND SER-209</scope>
    <scope>IDENTIFICATION BY MASS SPECTROMETRY [LARGE SCALE ANALYSIS]</scope>
</reference>
<reference key="19">
    <citation type="journal article" date="2013" name="J. Proteome Res.">
        <title>Toward a comprehensive characterization of a human cancer cell phosphoproteome.</title>
        <authorList>
            <person name="Zhou H."/>
            <person name="Di Palma S."/>
            <person name="Preisinger C."/>
            <person name="Peng M."/>
            <person name="Polat A.N."/>
            <person name="Heck A.J."/>
            <person name="Mohammed S."/>
        </authorList>
    </citation>
    <scope>PHOSPHORYLATION [LARGE SCALE ANALYSIS] AT SER-136 AND SER-209</scope>
    <scope>IDENTIFICATION BY MASS SPECTROMETRY [LARGE SCALE ANALYSIS]</scope>
    <source>
        <tissue>Cervix carcinoma</tissue>
        <tissue>Erythroleukemia</tissue>
    </source>
</reference>
<reference key="20">
    <citation type="journal article" date="2017" name="Nat. Struct. Mol. Biol.">
        <title>Site-specific mapping of the human SUMO proteome reveals co-modification with phosphorylation.</title>
        <authorList>
            <person name="Hendriks I.A."/>
            <person name="Lyon D."/>
            <person name="Young C."/>
            <person name="Jensen L.J."/>
            <person name="Vertegaal A.C."/>
            <person name="Nielsen M.L."/>
        </authorList>
    </citation>
    <scope>SUMOYLATION [LARGE SCALE ANALYSIS] AT LYS-89 AND LYS-617</scope>
    <scope>IDENTIFICATION BY MASS SPECTROMETRY [LARGE SCALE ANALYSIS]</scope>
</reference>
<reference key="21">
    <citation type="submission" date="2009-03" db="PDB data bank">
        <title>Crystal structure of the PWWP domain of human DNA (cytosine-5-)-methyltransferase 3 beta.</title>
        <authorList>
            <consortium name="Structural genomics consortium (SGC)"/>
        </authorList>
    </citation>
    <scope>X-RAY CRYSTALLOGRAPHY (1.8 ANGSTROMS) OF 206-355</scope>
</reference>
<reference key="22">
    <citation type="journal article" date="2011" name="PLoS ONE">
        <title>Structural and histone binding ability characterizations of human PWWP domains.</title>
        <authorList>
            <person name="Wu H."/>
            <person name="Zeng H."/>
            <person name="Lam R."/>
            <person name="Tempel W."/>
            <person name="Amaya M.F."/>
            <person name="Xu C."/>
            <person name="Dombrovski L."/>
            <person name="Qiu W."/>
            <person name="Wang Y."/>
            <person name="Min J."/>
        </authorList>
    </citation>
    <scope>X-RAY CRYSTALLOGRAPHY (2.04 ANGSTROMS) OF 380-509</scope>
</reference>
<reference key="23">
    <citation type="journal article" date="1999" name="Cell">
        <title>DNA methyltransferases Dnmt3a and Dnmt3b are essential for de novo methylation and mammalian development.</title>
        <authorList>
            <person name="Okano M."/>
            <person name="Bell D.W."/>
            <person name="Haber D.A."/>
            <person name="Li E."/>
        </authorList>
    </citation>
    <scope>VARIANTS ICF1 THR-603 AND SER-THR-PRO-806 INS</scope>
</reference>
<reference key="24">
    <citation type="journal article" date="1999" name="Proc. Natl. Acad. Sci. U.S.A.">
        <title>The DNMT3B DNA methyltransferase gene is mutated in the ICF immunodeficiency syndrome.</title>
        <authorList>
            <person name="Hansen R.S."/>
            <person name="Wijmenga C."/>
            <person name="Luo P."/>
            <person name="Stanek A.M."/>
            <person name="Canfield T.K."/>
            <person name="Weemaes C.M.R."/>
            <person name="Gartler S.M."/>
        </authorList>
    </citation>
    <scope>VARIANTS ICF1 THR-603; GLY-726 AND SER-THR-PRO-806 INS</scope>
</reference>
<reference key="25">
    <citation type="journal article" date="2000" name="Hum. Mutat.">
        <title>Genetic variation in ICF syndrome: evidence for genetic heterogeneity.</title>
        <authorList>
            <person name="Wijmenga C."/>
            <person name="Hansen R.S."/>
            <person name="Gimelli G."/>
            <person name="Bjoerck E.J."/>
            <person name="Davies E.G."/>
            <person name="Valentine D."/>
            <person name="Belohradsky B.H."/>
            <person name="van Dongen J.J."/>
            <person name="Smeets D.F.C.M."/>
            <person name="van den Heuvel L.P.W.J."/>
            <person name="Luyten J.A.F.M."/>
            <person name="Strengman E."/>
            <person name="Weemaes C.M.R."/>
            <person name="Pearson P.L."/>
        </authorList>
    </citation>
    <scope>VARIANTS ICF1 VAL-585; THR-603; ALA-606; GLY-699; GLY-726; PRO-766; ARG-814 AND MET-818</scope>
</reference>
<reference key="26">
    <citation type="journal article" date="2005" name="Hum. Mutat.">
        <title>DNMT3B mutations and DNA methylation defect define two types of ICF syndrome.</title>
        <authorList>
            <person name="Jiang Y.L."/>
            <person name="Rigolet M."/>
            <person name="Bourc'his D."/>
            <person name="Nigon F."/>
            <person name="Bokesoy I."/>
            <person name="Fryns J.-P."/>
            <person name="Hulten M."/>
            <person name="Jonveaux P."/>
            <person name="Maraschio P."/>
            <person name="Megarbane A."/>
            <person name="Moncla A."/>
            <person name="Viegas-Pequignot E."/>
        </authorList>
    </citation>
    <scope>VARIANTS ICF1 PRO-270; VAL-585; THR-603; ALA-606; SER-663; PRO-664; GLY-699; GLY-726; PRO-766; ARG-814; GLY-817; MET-818 AND GLN-840</scope>
</reference>
<reference key="27">
    <citation type="journal article" date="2011" name="J. Clin. Immunol.">
        <title>ICF syndrome in Saudi Arabia: immunological, cytogenetic and molecular analysis.</title>
        <authorList>
            <person name="Kaya N."/>
            <person name="Al-Muhsen S."/>
            <person name="Al-Saud B."/>
            <person name="Al-Bakheet A."/>
            <person name="Colak D."/>
            <person name="Al-Ghonaium A."/>
            <person name="Al-Dhekri H."/>
            <person name="Al-Mousa H."/>
            <person name="Arnaout R."/>
            <person name="Al-Owain M."/>
            <person name="Iqbal M."/>
        </authorList>
    </citation>
    <scope>VARIANT ICF1 MET-836</scope>
</reference>
<reference key="28">
    <citation type="journal article" date="2016" name="Am. J. Hum. Genet.">
        <title>Mutations in DNMT3B modify epigenetic repression of the D4Z4 repeat and the penetrance of facioscapulohumeral dystrophy.</title>
        <authorList>
            <person name="van den Boogaard M.L."/>
            <person name="Lemmers R.J."/>
            <person name="Balog J."/>
            <person name="Wohlgemuth M."/>
            <person name="Auranen M."/>
            <person name="Mitsuhashi S."/>
            <person name="van der Vliet P.J."/>
            <person name="Straasheijm K.R."/>
            <person name="van den Akker R.F."/>
            <person name="Kriek M."/>
            <person name="Laurense-Bik M.E."/>
            <person name="Raz V."/>
            <person name="van Ostaijen-Ten Dam M.M."/>
            <person name="Hansson K.B."/>
            <person name="van der Kooi E.L."/>
            <person name="Kiuru-Enari S."/>
            <person name="Udd B."/>
            <person name="van Tol M.J."/>
            <person name="Nishino I."/>
            <person name="Tawil R."/>
            <person name="Tapscott S.J."/>
            <person name="van Engelen B.G."/>
            <person name="van der Maarel S.M."/>
        </authorList>
    </citation>
    <scope>VARIANTS FSHD4 ARG-527 AND LEU-691</scope>
    <scope>FUNCTION</scope>
</reference>
<reference key="29">
    <citation type="journal article" date="2016" name="J. Clin. Immunol.">
        <title>A novel mutation in a critical region for the methyl donor binding in DNMT3B causes immunodeficiency, centromeric instability, and facial anomalies syndrome (ICF).</title>
        <authorList>
            <person name="Rechavi E."/>
            <person name="Lev A."/>
            <person name="Eyal E."/>
            <person name="Barel O."/>
            <person name="Kol N."/>
            <person name="Barhom S.F."/>
            <person name="Pode-Shakked B."/>
            <person name="Anikster Y."/>
            <person name="Somech R."/>
            <person name="Simon A.J."/>
        </authorList>
    </citation>
    <scope>VARIANT ICF1 THR-585</scope>
</reference>
<feature type="chain" id="PRO_0000088045" description="DNA (cytosine-5)-methyltransferase 3B">
    <location>
        <begin position="1"/>
        <end position="853"/>
    </location>
</feature>
<feature type="domain" description="PWWP" evidence="3">
    <location>
        <begin position="225"/>
        <end position="283"/>
    </location>
</feature>
<feature type="domain" description="ADD" evidence="4">
    <location>
        <begin position="423"/>
        <end position="555"/>
    </location>
</feature>
<feature type="domain" description="SAM-dependent MTase C5-type" evidence="5">
    <location>
        <begin position="575"/>
        <end position="853"/>
    </location>
</feature>
<feature type="zinc finger region" description="GATA-type; atypical" evidence="4">
    <location>
        <begin position="434"/>
        <end position="464"/>
    </location>
</feature>
<feature type="zinc finger region" description="PHD-type; atypical" evidence="4">
    <location>
        <begin position="475"/>
        <end position="531"/>
    </location>
</feature>
<feature type="region of interest" description="Interaction with DNMT1 and DNMT3A" evidence="13">
    <location>
        <begin position="1"/>
        <end position="298"/>
    </location>
</feature>
<feature type="region of interest" description="Disordered" evidence="7">
    <location>
        <begin position="1"/>
        <end position="218"/>
    </location>
</feature>
<feature type="region of interest" description="Disordered" evidence="7">
    <location>
        <begin position="341"/>
        <end position="423"/>
    </location>
</feature>
<feature type="region of interest" description="Interaction with the PRC2/EED-EZH2 complex" evidence="1">
    <location>
        <begin position="435"/>
        <end position="527"/>
    </location>
</feature>
<feature type="compositionally biased region" description="Basic and acidic residues" evidence="7">
    <location>
        <begin position="1"/>
        <end position="20"/>
    </location>
</feature>
<feature type="compositionally biased region" description="Acidic residues" evidence="7">
    <location>
        <begin position="72"/>
        <end position="81"/>
    </location>
</feature>
<feature type="compositionally biased region" description="Basic residues" evidence="7">
    <location>
        <begin position="115"/>
        <end position="130"/>
    </location>
</feature>
<feature type="compositionally biased region" description="Polar residues" evidence="7">
    <location>
        <begin position="179"/>
        <end position="199"/>
    </location>
</feature>
<feature type="compositionally biased region" description="Basic and acidic residues" evidence="7">
    <location>
        <begin position="368"/>
        <end position="385"/>
    </location>
</feature>
<feature type="compositionally biased region" description="Basic and acidic residues" evidence="7">
    <location>
        <begin position="407"/>
        <end position="417"/>
    </location>
</feature>
<feature type="active site" evidence="5 6">
    <location>
        <position position="651"/>
    </location>
</feature>
<feature type="binding site" evidence="2">
    <location>
        <begin position="582"/>
        <end position="586"/>
    </location>
    <ligand>
        <name>S-adenosyl-L-methionine</name>
        <dbReference type="ChEBI" id="CHEBI:59789"/>
    </ligand>
</feature>
<feature type="binding site" evidence="2">
    <location>
        <position position="605"/>
    </location>
    <ligand>
        <name>S-adenosyl-L-methionine</name>
        <dbReference type="ChEBI" id="CHEBI:59789"/>
    </ligand>
</feature>
<feature type="binding site" evidence="2">
    <location>
        <begin position="627"/>
        <end position="629"/>
    </location>
    <ligand>
        <name>S-adenosyl-L-methionine</name>
        <dbReference type="ChEBI" id="CHEBI:59789"/>
    </ligand>
</feature>
<feature type="binding site" evidence="2">
    <location>
        <begin position="832"/>
        <end position="834"/>
    </location>
    <ligand>
        <name>S-adenosyl-L-methionine</name>
        <dbReference type="ChEBI" id="CHEBI:59789"/>
    </ligand>
</feature>
<feature type="modified residue" description="Phosphoserine" evidence="29">
    <location>
        <position position="82"/>
    </location>
</feature>
<feature type="modified residue" description="Phosphothreonine" evidence="29">
    <location>
        <position position="96"/>
    </location>
</feature>
<feature type="modified residue" description="Phosphoserine" evidence="29">
    <location>
        <position position="100"/>
    </location>
</feature>
<feature type="modified residue" description="Phosphoserine" evidence="29">
    <location>
        <position position="110"/>
    </location>
</feature>
<feature type="modified residue" description="Phosphoserine" evidence="28 29 30">
    <location>
        <position position="136"/>
    </location>
</feature>
<feature type="modified residue" description="Phosphoserine" evidence="29">
    <location>
        <position position="195"/>
    </location>
</feature>
<feature type="modified residue" description="Phosphoserine" evidence="29">
    <location>
        <position position="202"/>
    </location>
</feature>
<feature type="modified residue" description="Phosphoserine" evidence="29 30">
    <location>
        <position position="209"/>
    </location>
</feature>
<feature type="modified residue" description="Citrulline" evidence="1">
    <location>
        <position position="410"/>
    </location>
</feature>
<feature type="cross-link" description="Glycyl lysine isopeptide (Lys-Gly) (interchain with G-Cter in SUMO2)" evidence="31">
    <location>
        <position position="89"/>
    </location>
</feature>
<feature type="cross-link" description="Glycyl lysine isopeptide (Lys-Gly) (interchain with G-Cter in SUMO2)" evidence="31">
    <location>
        <position position="617"/>
    </location>
</feature>
<feature type="splice variant" id="VSP_005636" description="In isoform 6." evidence="25">
    <original>M</original>
    <variation>MEPSPEPPSLESM</variation>
    <location>
        <position position="1"/>
    </location>
</feature>
<feature type="splice variant" id="VSP_045874" description="In isoform 7." evidence="26">
    <location>
        <begin position="69"/>
        <end position="144"/>
    </location>
</feature>
<feature type="splice variant" id="VSP_045875" description="In isoform 8." evidence="26">
    <location>
        <begin position="103"/>
        <end position="144"/>
    </location>
</feature>
<feature type="splice variant" id="VSP_005637" description="In isoform 2, isoform 3, isoform 4, isoform 5, isoform 6, isoform 7 and isoform 8." evidence="23 24 25 26">
    <location>
        <begin position="356"/>
        <end position="375"/>
    </location>
</feature>
<feature type="splice variant" id="VSP_045876" description="In isoform 7 and isoform 8." evidence="26">
    <location>
        <begin position="744"/>
        <end position="806"/>
    </location>
</feature>
<feature type="splice variant" id="VSP_005639" description="In isoform 4." evidence="23">
    <original>R</original>
    <variation>S</variation>
    <location>
        <position position="744"/>
    </location>
</feature>
<feature type="splice variant" id="VSP_005640" description="In isoform 4." evidence="23">
    <location>
        <begin position="745"/>
        <end position="853"/>
    </location>
</feature>
<feature type="splice variant" id="VSP_005638" description="In isoform 3." evidence="24">
    <location>
        <begin position="745"/>
        <end position="807"/>
    </location>
</feature>
<feature type="splice variant" id="VSP_005641" description="In isoform 5." evidence="23">
    <original>LKKVQTITTKSNSIKQGKNQLFPVVMNGKEDVLWCTELERIFGFPVHYTDVSNMGRGARQKLLGRSWSVPVIRHLFAPLKDYFACE</original>
    <variation>DLWLSCALHRRVQHGPWCPPEAAGKVLERACHPTPLRPSEGLLCM</variation>
    <location>
        <begin position="768"/>
        <end position="853"/>
    </location>
</feature>
<feature type="sequence variant" id="VAR_033885" description="In dbSNP:rs17123590.">
    <original>R</original>
    <variation>P</variation>
    <location>
        <position position="54"/>
    </location>
</feature>
<feature type="sequence variant" id="VAR_022579" description="In ICF1; dbSNP:rs121908947." evidence="14">
    <original>S</original>
    <variation>P</variation>
    <location>
        <position position="270"/>
    </location>
</feature>
<feature type="sequence variant" id="VAR_077527" description="In FSHD4; dbSNP:rs2146029958." evidence="21">
    <original>C</original>
    <variation>R</variation>
    <location>
        <position position="527"/>
    </location>
</feature>
<feature type="sequence variant" id="VAR_077528" description="In ICF1; dbSNP:rs750849178." evidence="22">
    <original>A</original>
    <variation>T</variation>
    <location>
        <position position="585"/>
    </location>
</feature>
<feature type="sequence variant" id="VAR_011506" description="In ICF1; dbSNP:rs1981037102." evidence="11 14">
    <original>A</original>
    <variation>V</variation>
    <location>
        <position position="585"/>
    </location>
</feature>
<feature type="sequence variant" id="VAR_011499" description="In ICF1; dbSNP:rs121908943." evidence="8 9 11 14">
    <original>A</original>
    <variation>T</variation>
    <location>
        <position position="603"/>
    </location>
</feature>
<feature type="sequence variant" id="VAR_011507" description="In ICF1; dbSNP:rs867732105." evidence="11 14">
    <original>V</original>
    <variation>A</variation>
    <location>
        <position position="606"/>
    </location>
</feature>
<feature type="sequence variant" id="VAR_011500" description="In ICF1; dbSNP:rs121908942." evidence="10 14">
    <original>G</original>
    <variation>S</variation>
    <location>
        <position position="663"/>
    </location>
</feature>
<feature type="sequence variant" id="VAR_022580" description="In ICF1." evidence="14">
    <original>L</original>
    <variation>P</variation>
    <location>
        <position position="664"/>
    </location>
</feature>
<feature type="sequence variant" id="VAR_077529" description="In FSHD4; dbSNP:rs889145646." evidence="21">
    <original>P</original>
    <variation>L</variation>
    <location>
        <position position="691"/>
    </location>
</feature>
<feature type="sequence variant" id="VAR_011508" description="In ICF1." evidence="11 14">
    <original>V</original>
    <variation>G</variation>
    <location>
        <position position="699"/>
    </location>
</feature>
<feature type="sequence variant" id="VAR_011501" description="In ICF1; dbSNP:rs121908941." evidence="9 10 11 14">
    <original>V</original>
    <variation>G</variation>
    <location>
        <position position="726"/>
    </location>
</feature>
<feature type="sequence variant" id="VAR_011509" description="In ICF1; dbSNP:rs1191203668." evidence="11 14">
    <original>A</original>
    <variation>P</variation>
    <location>
        <position position="766"/>
    </location>
</feature>
<feature type="sequence variant" id="VAR_011502" description="In ICF1.">
    <original>E</original>
    <variation>ESTP</variation>
    <location>
        <position position="806"/>
    </location>
</feature>
<feature type="sequence variant" id="VAR_011510" description="In ICF1; dbSNP:rs1219696128." evidence="11 14">
    <original>H</original>
    <variation>R</variation>
    <location>
        <position position="814"/>
    </location>
</feature>
<feature type="sequence variant" id="VAR_011503" description="In ICF1; dbSNP:rs121908939." evidence="10 14">
    <original>D</original>
    <variation>G</variation>
    <location>
        <position position="817"/>
    </location>
</feature>
<feature type="sequence variant" id="VAR_011504" description="In ICF1; dbSNP:rs121908940." evidence="10 11 14">
    <original>V</original>
    <variation>M</variation>
    <location>
        <position position="818"/>
    </location>
</feature>
<feature type="sequence variant" id="VAR_077530" description="In ICF1; uncertain significance; dbSNP:rs866792483." evidence="20">
    <original>V</original>
    <variation>M</variation>
    <location>
        <position position="836"/>
    </location>
</feature>
<feature type="sequence variant" id="VAR_022581" description="In ICF1; dbSNP:rs121908946." evidence="14">
    <original>R</original>
    <variation>Q</variation>
    <location>
        <position position="840"/>
    </location>
</feature>
<feature type="sequence conflict" description="In Ref. 4; BAG61690." evidence="27" ref="4">
    <original>I</original>
    <variation>T</variation>
    <location>
        <position position="575"/>
    </location>
</feature>
<feature type="sequence conflict" description="In Ref. 4; BAG61753." evidence="27" ref="4">
    <original>G</original>
    <variation>D</variation>
    <location>
        <position position="583"/>
    </location>
</feature>
<feature type="sequence conflict" description="In Ref. 4; BAG61690." evidence="27" ref="4">
    <original>S</original>
    <variation>P</variation>
    <location>
        <position position="655"/>
    </location>
</feature>
<feature type="helix" evidence="37">
    <location>
        <begin position="148"/>
        <end position="154"/>
    </location>
</feature>
<feature type="helix" evidence="37">
    <location>
        <begin position="184"/>
        <end position="193"/>
    </location>
</feature>
<feature type="turn" evidence="37">
    <location>
        <begin position="201"/>
        <end position="203"/>
    </location>
</feature>
<feature type="helix" evidence="37">
    <location>
        <begin position="204"/>
        <end position="206"/>
    </location>
</feature>
<feature type="strand" evidence="32">
    <location>
        <begin position="219"/>
        <end position="222"/>
    </location>
</feature>
<feature type="strand" evidence="33">
    <location>
        <begin position="228"/>
        <end position="231"/>
    </location>
</feature>
<feature type="strand" evidence="33">
    <location>
        <begin position="239"/>
        <end position="244"/>
    </location>
</feature>
<feature type="helix" evidence="33">
    <location>
        <begin position="246"/>
        <end position="248"/>
    </location>
</feature>
<feature type="strand" evidence="40">
    <location>
        <begin position="249"/>
        <end position="251"/>
    </location>
</feature>
<feature type="strand" evidence="33">
    <location>
        <begin position="258"/>
        <end position="263"/>
    </location>
</feature>
<feature type="turn" evidence="33">
    <location>
        <begin position="264"/>
        <end position="266"/>
    </location>
</feature>
<feature type="strand" evidence="33">
    <location>
        <begin position="269"/>
        <end position="273"/>
    </location>
</feature>
<feature type="helix" evidence="33">
    <location>
        <begin position="274"/>
        <end position="276"/>
    </location>
</feature>
<feature type="strand" evidence="33">
    <location>
        <begin position="277"/>
        <end position="279"/>
    </location>
</feature>
<feature type="helix" evidence="33">
    <location>
        <begin position="283"/>
        <end position="286"/>
    </location>
</feature>
<feature type="helix" evidence="33">
    <location>
        <begin position="289"/>
        <end position="294"/>
    </location>
</feature>
<feature type="helix" evidence="33">
    <location>
        <begin position="296"/>
        <end position="313"/>
    </location>
</feature>
<feature type="helix" evidence="33">
    <location>
        <begin position="325"/>
        <end position="337"/>
    </location>
</feature>
<feature type="turn" evidence="33">
    <location>
        <begin position="341"/>
        <end position="343"/>
    </location>
</feature>
<feature type="helix" evidence="33">
    <location>
        <begin position="344"/>
        <end position="348"/>
    </location>
</feature>
<feature type="helix" evidence="39">
    <location>
        <begin position="417"/>
        <end position="425"/>
    </location>
</feature>
<feature type="helix" evidence="39">
    <location>
        <begin position="431"/>
        <end position="433"/>
    </location>
</feature>
<feature type="turn" evidence="39">
    <location>
        <begin position="436"/>
        <end position="438"/>
    </location>
</feature>
<feature type="strand" evidence="39">
    <location>
        <begin position="444"/>
        <end position="446"/>
    </location>
</feature>
<feature type="strand" evidence="39">
    <location>
        <begin position="448"/>
        <end position="454"/>
    </location>
</feature>
<feature type="helix" evidence="39">
    <location>
        <begin position="456"/>
        <end position="463"/>
    </location>
</feature>
<feature type="strand" evidence="39">
    <location>
        <begin position="473"/>
        <end position="478"/>
    </location>
</feature>
<feature type="turn" evidence="39">
    <location>
        <begin position="479"/>
        <end position="481"/>
    </location>
</feature>
<feature type="strand" evidence="39">
    <location>
        <begin position="485"/>
        <end position="489"/>
    </location>
</feature>
<feature type="turn" evidence="39">
    <location>
        <begin position="493"/>
        <end position="495"/>
    </location>
</feature>
<feature type="strand" evidence="39">
    <location>
        <begin position="498"/>
        <end position="500"/>
    </location>
</feature>
<feature type="helix" evidence="39">
    <location>
        <begin position="501"/>
        <end position="507"/>
    </location>
</feature>
<feature type="helix" evidence="39">
    <location>
        <begin position="512"/>
        <end position="517"/>
    </location>
</feature>
<feature type="strand" evidence="39">
    <location>
        <begin position="519"/>
        <end position="521"/>
    </location>
</feature>
<feature type="turn" evidence="39">
    <location>
        <begin position="525"/>
        <end position="527"/>
    </location>
</feature>
<feature type="strand" evidence="39">
    <location>
        <begin position="536"/>
        <end position="538"/>
    </location>
</feature>
<feature type="helix" evidence="39">
    <location>
        <begin position="542"/>
        <end position="551"/>
    </location>
</feature>
<feature type="turn" evidence="38">
    <location>
        <begin position="569"/>
        <end position="571"/>
    </location>
</feature>
<feature type="strand" evidence="34">
    <location>
        <begin position="575"/>
        <end position="580"/>
    </location>
</feature>
<feature type="turn" evidence="34">
    <location>
        <begin position="583"/>
        <end position="585"/>
    </location>
</feature>
<feature type="helix" evidence="34">
    <location>
        <begin position="586"/>
        <end position="593"/>
    </location>
</feature>
<feature type="strand" evidence="34">
    <location>
        <begin position="598"/>
        <end position="604"/>
    </location>
</feature>
<feature type="helix" evidence="34">
    <location>
        <begin position="608"/>
        <end position="617"/>
    </location>
</feature>
<feature type="turn" evidence="34">
    <location>
        <begin position="618"/>
        <end position="620"/>
    </location>
</feature>
<feature type="strand" evidence="34">
    <location>
        <begin position="622"/>
        <end position="624"/>
    </location>
</feature>
<feature type="helix" evidence="34">
    <location>
        <begin position="628"/>
        <end position="630"/>
    </location>
</feature>
<feature type="helix" evidence="34">
    <location>
        <begin position="633"/>
        <end position="639"/>
    </location>
</feature>
<feature type="strand" evidence="34">
    <location>
        <begin position="643"/>
        <end position="647"/>
    </location>
</feature>
<feature type="turn" evidence="34">
    <location>
        <begin position="652"/>
        <end position="654"/>
    </location>
</feature>
<feature type="strand" evidence="34">
    <location>
        <begin position="656"/>
        <end position="658"/>
    </location>
</feature>
<feature type="turn" evidence="36">
    <location>
        <begin position="663"/>
        <end position="665"/>
    </location>
</feature>
<feature type="turn" evidence="34">
    <location>
        <begin position="667"/>
        <end position="670"/>
    </location>
</feature>
<feature type="helix" evidence="34">
    <location>
        <begin position="671"/>
        <end position="682"/>
    </location>
</feature>
<feature type="strand" evidence="34">
    <location>
        <begin position="693"/>
        <end position="700"/>
    </location>
</feature>
<feature type="helix" evidence="34">
    <location>
        <begin position="704"/>
        <end position="713"/>
    </location>
</feature>
<feature type="strand" evidence="34">
    <location>
        <begin position="719"/>
        <end position="722"/>
    </location>
</feature>
<feature type="helix" evidence="34">
    <location>
        <begin position="723"/>
        <end position="725"/>
    </location>
</feature>
<feature type="strand" evidence="34">
    <location>
        <begin position="727"/>
        <end position="729"/>
    </location>
</feature>
<feature type="strand" evidence="34">
    <location>
        <begin position="732"/>
        <end position="737"/>
    </location>
</feature>
<feature type="turn" evidence="34">
    <location>
        <begin position="740"/>
        <end position="743"/>
    </location>
</feature>
<feature type="strand" evidence="35">
    <location>
        <begin position="750"/>
        <end position="752"/>
    </location>
</feature>
<feature type="helix" evidence="34">
    <location>
        <begin position="756"/>
        <end position="759"/>
    </location>
</feature>
<feature type="strand" evidence="34">
    <location>
        <begin position="765"/>
        <end position="767"/>
    </location>
</feature>
<feature type="strand" evidence="34">
    <location>
        <begin position="769"/>
        <end position="771"/>
    </location>
</feature>
<feature type="helix" evidence="34">
    <location>
        <begin position="778"/>
        <end position="780"/>
    </location>
</feature>
<feature type="strand" evidence="34">
    <location>
        <begin position="781"/>
        <end position="783"/>
    </location>
</feature>
<feature type="turn" evidence="34">
    <location>
        <begin position="784"/>
        <end position="787"/>
    </location>
</feature>
<feature type="strand" evidence="34">
    <location>
        <begin position="790"/>
        <end position="793"/>
    </location>
</feature>
<feature type="strand" evidence="34">
    <location>
        <begin position="796"/>
        <end position="798"/>
    </location>
</feature>
<feature type="helix" evidence="34">
    <location>
        <begin position="802"/>
        <end position="809"/>
    </location>
</feature>
<feature type="turn" evidence="34">
    <location>
        <begin position="813"/>
        <end position="816"/>
    </location>
</feature>
<feature type="helix" evidence="34">
    <location>
        <begin position="823"/>
        <end position="831"/>
    </location>
</feature>
<feature type="helix" evidence="34">
    <location>
        <begin position="836"/>
        <end position="843"/>
    </location>
</feature>
<feature type="helix" evidence="34">
    <location>
        <begin position="844"/>
        <end position="848"/>
    </location>
</feature>
<gene>
    <name type="primary">DNMT3B</name>
</gene>
<dbReference type="EC" id="2.1.1.37"/>
<dbReference type="EMBL" id="AF156487">
    <property type="protein sequence ID" value="AAD53062.1"/>
    <property type="molecule type" value="mRNA"/>
</dbReference>
<dbReference type="EMBL" id="AF156488">
    <property type="protein sequence ID" value="AAD53063.1"/>
    <property type="molecule type" value="mRNA"/>
</dbReference>
<dbReference type="EMBL" id="AF176228">
    <property type="protein sequence ID" value="AAF04015.1"/>
    <property type="molecule type" value="mRNA"/>
</dbReference>
<dbReference type="EMBL" id="AF331857">
    <property type="protein sequence ID" value="AAL57040.1"/>
    <property type="molecule type" value="mRNA"/>
</dbReference>
<dbReference type="EMBL" id="AK299821">
    <property type="protein sequence ID" value="BAG61690.1"/>
    <property type="molecule type" value="mRNA"/>
</dbReference>
<dbReference type="EMBL" id="AK299915">
    <property type="protein sequence ID" value="BAG61753.1"/>
    <property type="molecule type" value="mRNA"/>
</dbReference>
<dbReference type="EMBL" id="AL035071">
    <property type="status" value="NOT_ANNOTATED_CDS"/>
    <property type="molecule type" value="Genomic_DNA"/>
</dbReference>
<dbReference type="EMBL" id="CH471077">
    <property type="protein sequence ID" value="EAW76351.1"/>
    <property type="molecule type" value="Genomic_DNA"/>
</dbReference>
<dbReference type="EMBL" id="CH471077">
    <property type="protein sequence ID" value="EAW76352.1"/>
    <property type="molecule type" value="Genomic_DNA"/>
</dbReference>
<dbReference type="EMBL" id="CH471077">
    <property type="protein sequence ID" value="EAW76353.1"/>
    <property type="molecule type" value="Genomic_DNA"/>
</dbReference>
<dbReference type="EMBL" id="CH471077">
    <property type="protein sequence ID" value="EAW76354.1"/>
    <property type="molecule type" value="Genomic_DNA"/>
</dbReference>
<dbReference type="EMBL" id="CH471077">
    <property type="protein sequence ID" value="EAW76356.1"/>
    <property type="molecule type" value="Genomic_DNA"/>
</dbReference>
<dbReference type="EMBL" id="AF129267">
    <property type="protein sequence ID" value="AAD31432.1"/>
    <property type="molecule type" value="mRNA"/>
</dbReference>
<dbReference type="EMBL" id="AF129268">
    <property type="protein sequence ID" value="AAD31433.1"/>
    <property type="molecule type" value="mRNA"/>
</dbReference>
<dbReference type="EMBL" id="AF129269">
    <property type="protein sequence ID" value="AAD31434.1"/>
    <property type="molecule type" value="mRNA"/>
</dbReference>
<dbReference type="CCDS" id="CCDS13204.1">
    <molecule id="Q9UBC3-6"/>
</dbReference>
<dbReference type="CCDS" id="CCDS13205.1">
    <molecule id="Q9UBC3-1"/>
</dbReference>
<dbReference type="CCDS" id="CCDS13206.1">
    <molecule id="Q9UBC3-2"/>
</dbReference>
<dbReference type="CCDS" id="CCDS13207.1">
    <molecule id="Q9UBC3-3"/>
</dbReference>
<dbReference type="CCDS" id="CCDS56183.1">
    <molecule id="Q9UBC3-8"/>
</dbReference>
<dbReference type="CCDS" id="CCDS56184.1">
    <molecule id="Q9UBC3-7"/>
</dbReference>
<dbReference type="RefSeq" id="NP_001193984.1">
    <molecule id="Q9UBC3-8"/>
    <property type="nucleotide sequence ID" value="NM_001207055.2"/>
</dbReference>
<dbReference type="RefSeq" id="NP_001193985.1">
    <molecule id="Q9UBC3-7"/>
    <property type="nucleotide sequence ID" value="NM_001207056.2"/>
</dbReference>
<dbReference type="RefSeq" id="NP_001411282.1">
    <molecule id="Q9UBC3-5"/>
    <property type="nucleotide sequence ID" value="NM_001424353.1"/>
</dbReference>
<dbReference type="RefSeq" id="NP_008823.1">
    <molecule id="Q9UBC3-1"/>
    <property type="nucleotide sequence ID" value="NM_006892.4"/>
</dbReference>
<dbReference type="RefSeq" id="NP_787044.1">
    <molecule id="Q9UBC3-2"/>
    <property type="nucleotide sequence ID" value="NM_175848.2"/>
</dbReference>
<dbReference type="RefSeq" id="NP_787045.1">
    <molecule id="Q9UBC3-3"/>
    <property type="nucleotide sequence ID" value="NM_175849.2"/>
</dbReference>
<dbReference type="RefSeq" id="NP_787046.1">
    <molecule id="Q9UBC3-6"/>
    <property type="nucleotide sequence ID" value="NM_175850.3"/>
</dbReference>
<dbReference type="PDB" id="3FLG">
    <property type="method" value="X-ray"/>
    <property type="resolution" value="1.80 A"/>
    <property type="chains" value="A=206-355"/>
</dbReference>
<dbReference type="PDB" id="3QKJ">
    <property type="method" value="X-ray"/>
    <property type="resolution" value="2.04 A"/>
    <property type="chains" value="A/B/C/D=206-355"/>
</dbReference>
<dbReference type="PDB" id="5CIU">
    <property type="method" value="X-ray"/>
    <property type="resolution" value="2.24 A"/>
    <property type="chains" value="A/B=206-355"/>
</dbReference>
<dbReference type="PDB" id="5NR3">
    <property type="method" value="X-ray"/>
    <property type="resolution" value="2.30 A"/>
    <property type="chains" value="A/B=206-355"/>
</dbReference>
<dbReference type="PDB" id="5NRR">
    <property type="method" value="X-ray"/>
    <property type="resolution" value="1.70 A"/>
    <property type="chains" value="A/B=206-355"/>
</dbReference>
<dbReference type="PDB" id="5NRS">
    <property type="method" value="X-ray"/>
    <property type="resolution" value="2.30 A"/>
    <property type="chains" value="A/B=206-355"/>
</dbReference>
<dbReference type="PDB" id="5NRV">
    <property type="method" value="X-ray"/>
    <property type="resolution" value="2.08 A"/>
    <property type="chains" value="A/D=206-355"/>
</dbReference>
<dbReference type="PDB" id="5NV0">
    <property type="method" value="X-ray"/>
    <property type="resolution" value="2.40 A"/>
    <property type="chains" value="A/B=206-355"/>
</dbReference>
<dbReference type="PDB" id="5NV2">
    <property type="method" value="X-ray"/>
    <property type="resolution" value="2.03 A"/>
    <property type="chains" value="A/B=206-355"/>
</dbReference>
<dbReference type="PDB" id="5NV7">
    <property type="method" value="X-ray"/>
    <property type="resolution" value="2.57 A"/>
    <property type="chains" value="A/B=206-355"/>
</dbReference>
<dbReference type="PDB" id="5NVO">
    <property type="method" value="X-ray"/>
    <property type="resolution" value="2.40 A"/>
    <property type="chains" value="A/B=206-355"/>
</dbReference>
<dbReference type="PDB" id="6KDA">
    <property type="method" value="X-ray"/>
    <property type="resolution" value="2.91 A"/>
    <property type="chains" value="A/D=571-853"/>
</dbReference>
<dbReference type="PDB" id="6KDB">
    <property type="method" value="X-ray"/>
    <property type="resolution" value="2.86 A"/>
    <property type="chains" value="A/D=571-853"/>
</dbReference>
<dbReference type="PDB" id="6KDL">
    <property type="method" value="X-ray"/>
    <property type="resolution" value="3.27 A"/>
    <property type="chains" value="A/D=571-853"/>
</dbReference>
<dbReference type="PDB" id="6KDP">
    <property type="method" value="X-ray"/>
    <property type="resolution" value="2.93 A"/>
    <property type="chains" value="A/D=571-853"/>
</dbReference>
<dbReference type="PDB" id="6KDT">
    <property type="method" value="X-ray"/>
    <property type="resolution" value="2.87 A"/>
    <property type="chains" value="A/D=571-853"/>
</dbReference>
<dbReference type="PDB" id="6PA7">
    <property type="method" value="EM"/>
    <property type="resolution" value="2.94 A"/>
    <property type="chains" value="N/S=1-853"/>
</dbReference>
<dbReference type="PDB" id="6R3E">
    <property type="method" value="X-ray"/>
    <property type="resolution" value="2.27 A"/>
    <property type="chains" value="A/B=215-351"/>
</dbReference>
<dbReference type="PDB" id="6U8P">
    <property type="method" value="X-ray"/>
    <property type="resolution" value="3.05 A"/>
    <property type="chains" value="A/D=563-853"/>
</dbReference>
<dbReference type="PDB" id="6U8V">
    <property type="method" value="X-ray"/>
    <property type="resolution" value="3.00 A"/>
    <property type="chains" value="A/D=563-853"/>
</dbReference>
<dbReference type="PDB" id="6U8W">
    <property type="method" value="X-ray"/>
    <property type="resolution" value="2.95 A"/>
    <property type="chains" value="A/D=563-853"/>
</dbReference>
<dbReference type="PDB" id="6U8X">
    <property type="method" value="X-ray"/>
    <property type="resolution" value="2.95 A"/>
    <property type="chains" value="A/D=563-853"/>
</dbReference>
<dbReference type="PDB" id="6U90">
    <property type="method" value="X-ray"/>
    <property type="resolution" value="3.00 A"/>
    <property type="chains" value="A/D=563-853"/>
</dbReference>
<dbReference type="PDB" id="6U91">
    <property type="method" value="X-ray"/>
    <property type="resolution" value="3.00 A"/>
    <property type="chains" value="A/D=563-853"/>
</dbReference>
<dbReference type="PDB" id="7O45">
    <property type="method" value="X-ray"/>
    <property type="resolution" value="2.10 A"/>
    <property type="chains" value="A/B/C/D=412-554"/>
</dbReference>
<dbReference type="PDB" id="7V0E">
    <property type="method" value="X-ray"/>
    <property type="resolution" value="3.27 A"/>
    <property type="chains" value="A/B/C/D/E/F/G/H=569-853"/>
</dbReference>
<dbReference type="PDB" id="7X9D">
    <property type="method" value="X-ray"/>
    <property type="resolution" value="3.08 A"/>
    <property type="chains" value="A/D=571-853"/>
</dbReference>
<dbReference type="PDB" id="8EIH">
    <property type="method" value="EM"/>
    <property type="resolution" value="3.04 A"/>
    <property type="chains" value="A/B/C/D/E=206-853"/>
</dbReference>
<dbReference type="PDB" id="8EII">
    <property type="method" value="EM"/>
    <property type="resolution" value="3.12 A"/>
    <property type="chains" value="A/B/C/D=206-853"/>
</dbReference>
<dbReference type="PDB" id="8EIJ">
    <property type="method" value="EM"/>
    <property type="resolution" value="3.34 A"/>
    <property type="chains" value="A/B/D=206-853"/>
</dbReference>
<dbReference type="PDB" id="8EIK">
    <property type="method" value="EM"/>
    <property type="resolution" value="3.19 A"/>
    <property type="chains" value="A/B/C/D/E/F=206-853"/>
</dbReference>
<dbReference type="PDB" id="8XEE">
    <property type="method" value="X-ray"/>
    <property type="resolution" value="3.03 A"/>
    <property type="chains" value="A/D=571-853"/>
</dbReference>
<dbReference type="PDBsum" id="3FLG"/>
<dbReference type="PDBsum" id="3QKJ"/>
<dbReference type="PDBsum" id="5CIU"/>
<dbReference type="PDBsum" id="5NR3"/>
<dbReference type="PDBsum" id="5NRR"/>
<dbReference type="PDBsum" id="5NRS"/>
<dbReference type="PDBsum" id="5NRV"/>
<dbReference type="PDBsum" id="5NV0"/>
<dbReference type="PDBsum" id="5NV2"/>
<dbReference type="PDBsum" id="5NV7"/>
<dbReference type="PDBsum" id="5NVO"/>
<dbReference type="PDBsum" id="6KDA"/>
<dbReference type="PDBsum" id="6KDB"/>
<dbReference type="PDBsum" id="6KDL"/>
<dbReference type="PDBsum" id="6KDP"/>
<dbReference type="PDBsum" id="6KDT"/>
<dbReference type="PDBsum" id="6PA7"/>
<dbReference type="PDBsum" id="6R3E"/>
<dbReference type="PDBsum" id="6U8P"/>
<dbReference type="PDBsum" id="6U8V"/>
<dbReference type="PDBsum" id="6U8W"/>
<dbReference type="PDBsum" id="6U8X"/>
<dbReference type="PDBsum" id="6U90"/>
<dbReference type="PDBsum" id="6U91"/>
<dbReference type="PDBsum" id="7O45"/>
<dbReference type="PDBsum" id="7V0E"/>
<dbReference type="PDBsum" id="7X9D"/>
<dbReference type="PDBsum" id="8EIH"/>
<dbReference type="PDBsum" id="8EII"/>
<dbReference type="PDBsum" id="8EIJ"/>
<dbReference type="PDBsum" id="8EIK"/>
<dbReference type="PDBsum" id="8XEE"/>
<dbReference type="EMDB" id="EMD-18793"/>
<dbReference type="EMDB" id="EMD-20281"/>
<dbReference type="EMDB" id="EMD-28156"/>
<dbReference type="EMDB" id="EMD-28157"/>
<dbReference type="EMDB" id="EMD-28158"/>
<dbReference type="EMDB" id="EMD-28159"/>
<dbReference type="SASBDB" id="Q9UBC3"/>
<dbReference type="SMR" id="Q9UBC3"/>
<dbReference type="BioGRID" id="108126">
    <property type="interactions" value="113"/>
</dbReference>
<dbReference type="ComplexPortal" id="CPX-6276">
    <property type="entry name" value="DNA (cytosine-5)-methyltransferase 3B complex"/>
</dbReference>
<dbReference type="CORUM" id="Q9UBC3"/>
<dbReference type="DIP" id="DIP-30000N"/>
<dbReference type="FunCoup" id="Q9UBC3">
    <property type="interactions" value="1112"/>
</dbReference>
<dbReference type="IntAct" id="Q9UBC3">
    <property type="interactions" value="41"/>
</dbReference>
<dbReference type="MINT" id="Q9UBC3"/>
<dbReference type="STRING" id="9606.ENSP00000328547"/>
<dbReference type="BindingDB" id="Q9UBC3"/>
<dbReference type="ChEMBL" id="CHEMBL6095"/>
<dbReference type="DrugBank" id="DB11672">
    <property type="generic name" value="Curcumin"/>
</dbReference>
<dbReference type="DrugBank" id="DB01262">
    <property type="generic name" value="Decitabine"/>
</dbReference>
<dbReference type="DrugBank" id="DB01752">
    <property type="generic name" value="S-adenosyl-L-homocysteine"/>
</dbReference>
<dbReference type="DrugCentral" id="Q9UBC3"/>
<dbReference type="REBASE" id="4120">
    <property type="entry name" value="M.HsaDnmt3B"/>
</dbReference>
<dbReference type="GlyGen" id="Q9UBC3">
    <property type="glycosylation" value="1 site, 1 O-linked glycan (1 site)"/>
</dbReference>
<dbReference type="iPTMnet" id="Q9UBC3"/>
<dbReference type="PhosphoSitePlus" id="Q9UBC3"/>
<dbReference type="BioMuta" id="DNMT3B"/>
<dbReference type="DMDM" id="17375667"/>
<dbReference type="jPOST" id="Q9UBC3"/>
<dbReference type="MassIVE" id="Q9UBC3"/>
<dbReference type="PaxDb" id="9606-ENSP00000328547"/>
<dbReference type="PeptideAtlas" id="Q9UBC3"/>
<dbReference type="ProteomicsDB" id="17089"/>
<dbReference type="ProteomicsDB" id="19210"/>
<dbReference type="ProteomicsDB" id="83935">
    <molecule id="Q9UBC3-1"/>
</dbReference>
<dbReference type="ProteomicsDB" id="83936">
    <molecule id="Q9UBC3-2"/>
</dbReference>
<dbReference type="ProteomicsDB" id="83937">
    <molecule id="Q9UBC3-3"/>
</dbReference>
<dbReference type="ProteomicsDB" id="83938">
    <molecule id="Q9UBC3-4"/>
</dbReference>
<dbReference type="ProteomicsDB" id="83939">
    <molecule id="Q9UBC3-5"/>
</dbReference>
<dbReference type="ProteomicsDB" id="83940">
    <molecule id="Q9UBC3-6"/>
</dbReference>
<dbReference type="Pumba" id="Q9UBC3"/>
<dbReference type="Antibodypedia" id="689">
    <property type="antibodies" value="523 antibodies from 43 providers"/>
</dbReference>
<dbReference type="DNASU" id="1789"/>
<dbReference type="Ensembl" id="ENST00000201963.3">
    <molecule id="Q9UBC3-6"/>
    <property type="protein sequence ID" value="ENSP00000201963.3"/>
    <property type="gene ID" value="ENSG00000088305.19"/>
</dbReference>
<dbReference type="Ensembl" id="ENST00000328111.6">
    <molecule id="Q9UBC3-1"/>
    <property type="protein sequence ID" value="ENSP00000328547.2"/>
    <property type="gene ID" value="ENSG00000088305.19"/>
</dbReference>
<dbReference type="Ensembl" id="ENST00000348286.6">
    <molecule id="Q9UBC3-3"/>
    <property type="protein sequence ID" value="ENSP00000337764.2"/>
    <property type="gene ID" value="ENSG00000088305.19"/>
</dbReference>
<dbReference type="Ensembl" id="ENST00000353855.6">
    <molecule id="Q9UBC3-2"/>
    <property type="protein sequence ID" value="ENSP00000313397.4"/>
    <property type="gene ID" value="ENSG00000088305.19"/>
</dbReference>
<dbReference type="Ensembl" id="ENST00000443239.7">
    <molecule id="Q9UBC3-8"/>
    <property type="protein sequence ID" value="ENSP00000403169.2"/>
    <property type="gene ID" value="ENSG00000088305.19"/>
</dbReference>
<dbReference type="Ensembl" id="ENST00000456297.6">
    <molecule id="Q9UBC3-7"/>
    <property type="protein sequence ID" value="ENSP00000412305.1"/>
    <property type="gene ID" value="ENSG00000088305.19"/>
</dbReference>
<dbReference type="GeneID" id="1789"/>
<dbReference type="KEGG" id="hsa:1789"/>
<dbReference type="MANE-Select" id="ENST00000328111.6">
    <property type="protein sequence ID" value="ENSP00000328547.2"/>
    <property type="RefSeq nucleotide sequence ID" value="NM_006892.4"/>
    <property type="RefSeq protein sequence ID" value="NP_008823.1"/>
</dbReference>
<dbReference type="UCSC" id="uc002wyc.3">
    <molecule id="Q9UBC3-1"/>
    <property type="organism name" value="human"/>
</dbReference>
<dbReference type="AGR" id="HGNC:2979"/>
<dbReference type="CTD" id="1789"/>
<dbReference type="DisGeNET" id="1789"/>
<dbReference type="GeneCards" id="DNMT3B"/>
<dbReference type="GeneReviews" id="DNMT3B"/>
<dbReference type="HGNC" id="HGNC:2979">
    <property type="gene designation" value="DNMT3B"/>
</dbReference>
<dbReference type="HPA" id="ENSG00000088305">
    <property type="expression patterns" value="Tissue enhanced (pancreas, testis)"/>
</dbReference>
<dbReference type="MalaCards" id="DNMT3B"/>
<dbReference type="MIM" id="242860">
    <property type="type" value="phenotype"/>
</dbReference>
<dbReference type="MIM" id="602900">
    <property type="type" value="gene"/>
</dbReference>
<dbReference type="MIM" id="619478">
    <property type="type" value="phenotype"/>
</dbReference>
<dbReference type="neXtProt" id="NX_Q9UBC3"/>
<dbReference type="OpenTargets" id="ENSG00000088305"/>
<dbReference type="Orphanet" id="269">
    <property type="disease" value="Facioscapulohumeral dystrophy"/>
</dbReference>
<dbReference type="Orphanet" id="2268">
    <property type="disease" value="ICF syndrome"/>
</dbReference>
<dbReference type="PharmGKB" id="PA27446"/>
<dbReference type="VEuPathDB" id="HostDB:ENSG00000088305"/>
<dbReference type="eggNOG" id="ENOG502QR6U">
    <property type="taxonomic scope" value="Eukaryota"/>
</dbReference>
<dbReference type="GeneTree" id="ENSGT00940000156928"/>
<dbReference type="HOGENOM" id="CLU_006958_9_1_1"/>
<dbReference type="InParanoid" id="Q9UBC3"/>
<dbReference type="OMA" id="CLEYSRI"/>
<dbReference type="OrthoDB" id="641149at2759"/>
<dbReference type="PAN-GO" id="Q9UBC3">
    <property type="GO annotations" value="5 GO annotations based on evolutionary models"/>
</dbReference>
<dbReference type="PhylomeDB" id="Q9UBC3"/>
<dbReference type="TreeFam" id="TF329039"/>
<dbReference type="BRENDA" id="2.1.1.37">
    <property type="organism ID" value="2681"/>
</dbReference>
<dbReference type="PathwayCommons" id="Q9UBC3"/>
<dbReference type="Reactome" id="R-HSA-212300">
    <property type="pathway name" value="PRC2 methylates histones and DNA"/>
</dbReference>
<dbReference type="Reactome" id="R-HSA-427413">
    <property type="pathway name" value="NoRC negatively regulates rRNA expression"/>
</dbReference>
<dbReference type="Reactome" id="R-HSA-4655427">
    <property type="pathway name" value="SUMOylation of DNA methylation proteins"/>
</dbReference>
<dbReference type="Reactome" id="R-HSA-5334118">
    <property type="pathway name" value="DNA methylation"/>
</dbReference>
<dbReference type="Reactome" id="R-HSA-9710421">
    <property type="pathway name" value="Defective pyroptosis"/>
</dbReference>
<dbReference type="SignaLink" id="Q9UBC3"/>
<dbReference type="SIGNOR" id="Q9UBC3"/>
<dbReference type="BioGRID-ORCS" id="1789">
    <property type="hits" value="19 hits in 1170 CRISPR screens"/>
</dbReference>
<dbReference type="ChiTaRS" id="DNMT3B">
    <property type="organism name" value="human"/>
</dbReference>
<dbReference type="EvolutionaryTrace" id="Q9UBC3"/>
<dbReference type="GeneWiki" id="DNMT3B"/>
<dbReference type="GenomeRNAi" id="1789"/>
<dbReference type="Pharos" id="Q9UBC3">
    <property type="development level" value="Tchem"/>
</dbReference>
<dbReference type="PRO" id="PR:Q9UBC3"/>
<dbReference type="Proteomes" id="UP000005640">
    <property type="component" value="Chromosome 20"/>
</dbReference>
<dbReference type="RNAct" id="Q9UBC3">
    <property type="molecule type" value="protein"/>
</dbReference>
<dbReference type="Bgee" id="ENSG00000088305">
    <property type="expression patterns" value="Expressed in secondary oocyte and 136 other cell types or tissues"/>
</dbReference>
<dbReference type="GO" id="GO:1902494">
    <property type="term" value="C:catalytic complex"/>
    <property type="evidence" value="ECO:0000353"/>
    <property type="project" value="ComplexPortal"/>
</dbReference>
<dbReference type="GO" id="GO:0005654">
    <property type="term" value="C:nucleoplasm"/>
    <property type="evidence" value="ECO:0000314"/>
    <property type="project" value="HPA"/>
</dbReference>
<dbReference type="GO" id="GO:0005634">
    <property type="term" value="C:nucleus"/>
    <property type="evidence" value="ECO:0000314"/>
    <property type="project" value="UniProtKB"/>
</dbReference>
<dbReference type="GO" id="GO:0003886">
    <property type="term" value="F:DNA (cytosine-5-)-methyltransferase activity"/>
    <property type="evidence" value="ECO:0000314"/>
    <property type="project" value="MGI"/>
</dbReference>
<dbReference type="GO" id="GO:0051718">
    <property type="term" value="F:DNA (cytosine-5-)-methyltransferase activity, acting on CpG substrates"/>
    <property type="evidence" value="ECO:0000318"/>
    <property type="project" value="GO_Central"/>
</dbReference>
<dbReference type="GO" id="GO:0003677">
    <property type="term" value="F:DNA binding"/>
    <property type="evidence" value="ECO:0000318"/>
    <property type="project" value="GO_Central"/>
</dbReference>
<dbReference type="GO" id="GO:0009008">
    <property type="term" value="F:DNA-methyltransferase activity"/>
    <property type="evidence" value="ECO:0000303"/>
    <property type="project" value="UniProtKB"/>
</dbReference>
<dbReference type="GO" id="GO:0003714">
    <property type="term" value="F:transcription corepressor activity"/>
    <property type="evidence" value="ECO:0000314"/>
    <property type="project" value="UniProtKB"/>
</dbReference>
<dbReference type="GO" id="GO:0008270">
    <property type="term" value="F:zinc ion binding"/>
    <property type="evidence" value="ECO:0007669"/>
    <property type="project" value="UniProtKB-KW"/>
</dbReference>
<dbReference type="GO" id="GO:0032259">
    <property type="term" value="P:methylation"/>
    <property type="evidence" value="ECO:0007669"/>
    <property type="project" value="UniProtKB-KW"/>
</dbReference>
<dbReference type="GO" id="GO:0000122">
    <property type="term" value="P:negative regulation of transcription by RNA polymerase II"/>
    <property type="evidence" value="ECO:0000314"/>
    <property type="project" value="UniProtKB"/>
</dbReference>
<dbReference type="GO" id="GO:0010628">
    <property type="term" value="P:positive regulation of gene expression"/>
    <property type="evidence" value="ECO:0000315"/>
    <property type="project" value="UniProtKB"/>
</dbReference>
<dbReference type="CDD" id="cd11728">
    <property type="entry name" value="ADDz_Dnmt3b"/>
    <property type="match status" value="1"/>
</dbReference>
<dbReference type="CDD" id="cd20155">
    <property type="entry name" value="PWWP_DNMT3B"/>
    <property type="match status" value="1"/>
</dbReference>
<dbReference type="FunFam" id="3.40.50.150:FF:000008">
    <property type="entry name" value="DNA (Cytosine-5)-methyltransferase 3A isoform X1"/>
    <property type="match status" value="1"/>
</dbReference>
<dbReference type="FunFam" id="2.30.30.140:FF:000006">
    <property type="entry name" value="DNA (Cytosine-5)-methyltransferase 3B isoform 3"/>
    <property type="match status" value="1"/>
</dbReference>
<dbReference type="FunFam" id="1.10.720.50:FF:000001">
    <property type="entry name" value="DNA (Cytosine-5)-methyltransferase 3B isoform X2"/>
    <property type="match status" value="1"/>
</dbReference>
<dbReference type="FunFam" id="3.40.50.150:FF:000011">
    <property type="entry name" value="DNA methyltransferase 3 alpha"/>
    <property type="match status" value="1"/>
</dbReference>
<dbReference type="Gene3D" id="2.30.30.140">
    <property type="match status" value="1"/>
</dbReference>
<dbReference type="Gene3D" id="1.10.720.50">
    <property type="entry name" value="PWWP, helical domain"/>
    <property type="match status" value="1"/>
</dbReference>
<dbReference type="Gene3D" id="3.40.50.150">
    <property type="entry name" value="Vaccinia Virus protein VP39"/>
    <property type="match status" value="2"/>
</dbReference>
<dbReference type="InterPro" id="IPR025766">
    <property type="entry name" value="ADD"/>
</dbReference>
<dbReference type="InterPro" id="IPR018117">
    <property type="entry name" value="C5_DNA_meth_AS"/>
</dbReference>
<dbReference type="InterPro" id="IPR001525">
    <property type="entry name" value="C5_MeTfrase"/>
</dbReference>
<dbReference type="InterPro" id="IPR040552">
    <property type="entry name" value="DNMT3_ADD_GATA1-like"/>
</dbReference>
<dbReference type="InterPro" id="IPR049554">
    <property type="entry name" value="DNMT3_ADD_PHD"/>
</dbReference>
<dbReference type="InterPro" id="IPR030488">
    <property type="entry name" value="DNMT3B_ADD"/>
</dbReference>
<dbReference type="InterPro" id="IPR000313">
    <property type="entry name" value="PWWP_dom"/>
</dbReference>
<dbReference type="InterPro" id="IPR029063">
    <property type="entry name" value="SAM-dependent_MTases_sf"/>
</dbReference>
<dbReference type="InterPro" id="IPR011011">
    <property type="entry name" value="Znf_FYVE_PHD"/>
</dbReference>
<dbReference type="PANTHER" id="PTHR23068:SF9">
    <property type="entry name" value="DNA (CYTOSINE-5)-METHYLTRANSFERASE 3B"/>
    <property type="match status" value="1"/>
</dbReference>
<dbReference type="PANTHER" id="PTHR23068">
    <property type="entry name" value="DNA CYTOSINE-5- -METHYLTRANSFERASE 3-RELATED"/>
    <property type="match status" value="1"/>
</dbReference>
<dbReference type="Pfam" id="PF17980">
    <property type="entry name" value="ADD_DNMT3"/>
    <property type="match status" value="1"/>
</dbReference>
<dbReference type="Pfam" id="PF00145">
    <property type="entry name" value="DNA_methylase"/>
    <property type="match status" value="1"/>
</dbReference>
<dbReference type="Pfam" id="PF21255">
    <property type="entry name" value="DNMT3_ADD_GATA1-like"/>
    <property type="match status" value="1"/>
</dbReference>
<dbReference type="Pfam" id="PF00855">
    <property type="entry name" value="PWWP"/>
    <property type="match status" value="1"/>
</dbReference>
<dbReference type="SMART" id="SM00293">
    <property type="entry name" value="PWWP"/>
    <property type="match status" value="1"/>
</dbReference>
<dbReference type="SUPFAM" id="SSF57903">
    <property type="entry name" value="FYVE/PHD zinc finger"/>
    <property type="match status" value="1"/>
</dbReference>
<dbReference type="SUPFAM" id="SSF53335">
    <property type="entry name" value="S-adenosyl-L-methionine-dependent methyltransferases"/>
    <property type="match status" value="1"/>
</dbReference>
<dbReference type="SUPFAM" id="SSF63748">
    <property type="entry name" value="Tudor/PWWP/MBT"/>
    <property type="match status" value="1"/>
</dbReference>
<dbReference type="PROSITE" id="PS51533">
    <property type="entry name" value="ADD"/>
    <property type="match status" value="1"/>
</dbReference>
<dbReference type="PROSITE" id="PS00094">
    <property type="entry name" value="C5_MTASE_1"/>
    <property type="match status" value="1"/>
</dbReference>
<dbReference type="PROSITE" id="PS50812">
    <property type="entry name" value="PWWP"/>
    <property type="match status" value="1"/>
</dbReference>
<dbReference type="PROSITE" id="PS51679">
    <property type="entry name" value="SAM_MT_C5"/>
    <property type="match status" value="1"/>
</dbReference>
<evidence type="ECO:0000250" key="1"/>
<evidence type="ECO:0000250" key="2">
    <source>
        <dbReference type="UniProtKB" id="Q9Y6K1"/>
    </source>
</evidence>
<evidence type="ECO:0000255" key="3">
    <source>
        <dbReference type="PROSITE-ProRule" id="PRU00162"/>
    </source>
</evidence>
<evidence type="ECO:0000255" key="4">
    <source>
        <dbReference type="PROSITE-ProRule" id="PRU00865"/>
    </source>
</evidence>
<evidence type="ECO:0000255" key="5">
    <source>
        <dbReference type="PROSITE-ProRule" id="PRU01016"/>
    </source>
</evidence>
<evidence type="ECO:0000255" key="6">
    <source>
        <dbReference type="PROSITE-ProRule" id="PRU10018"/>
    </source>
</evidence>
<evidence type="ECO:0000256" key="7">
    <source>
        <dbReference type="SAM" id="MobiDB-lite"/>
    </source>
</evidence>
<evidence type="ECO:0000269" key="8">
    <source>
    </source>
</evidence>
<evidence type="ECO:0000269" key="9">
    <source>
    </source>
</evidence>
<evidence type="ECO:0000269" key="10">
    <source>
    </source>
</evidence>
<evidence type="ECO:0000269" key="11">
    <source>
    </source>
</evidence>
<evidence type="ECO:0000269" key="12">
    <source>
    </source>
</evidence>
<evidence type="ECO:0000269" key="13">
    <source>
    </source>
</evidence>
<evidence type="ECO:0000269" key="14">
    <source>
    </source>
</evidence>
<evidence type="ECO:0000269" key="15">
    <source>
    </source>
</evidence>
<evidence type="ECO:0000269" key="16">
    <source>
    </source>
</evidence>
<evidence type="ECO:0000269" key="17">
    <source>
    </source>
</evidence>
<evidence type="ECO:0000269" key="18">
    <source>
    </source>
</evidence>
<evidence type="ECO:0000269" key="19">
    <source>
    </source>
</evidence>
<evidence type="ECO:0000269" key="20">
    <source>
    </source>
</evidence>
<evidence type="ECO:0000269" key="21">
    <source>
    </source>
</evidence>
<evidence type="ECO:0000269" key="22">
    <source>
    </source>
</evidence>
<evidence type="ECO:0000303" key="23">
    <source>
    </source>
</evidence>
<evidence type="ECO:0000303" key="24">
    <source>
    </source>
</evidence>
<evidence type="ECO:0000303" key="25">
    <source>
    </source>
</evidence>
<evidence type="ECO:0000303" key="26">
    <source>
    </source>
</evidence>
<evidence type="ECO:0000305" key="27"/>
<evidence type="ECO:0007744" key="28">
    <source>
    </source>
</evidence>
<evidence type="ECO:0007744" key="29">
    <source>
    </source>
</evidence>
<evidence type="ECO:0007744" key="30">
    <source>
    </source>
</evidence>
<evidence type="ECO:0007744" key="31">
    <source>
    </source>
</evidence>
<evidence type="ECO:0007829" key="32">
    <source>
        <dbReference type="PDB" id="5CIU"/>
    </source>
</evidence>
<evidence type="ECO:0007829" key="33">
    <source>
        <dbReference type="PDB" id="5NRR"/>
    </source>
</evidence>
<evidence type="ECO:0007829" key="34">
    <source>
        <dbReference type="PDB" id="6KDB"/>
    </source>
</evidence>
<evidence type="ECO:0007829" key="35">
    <source>
        <dbReference type="PDB" id="6KDP"/>
    </source>
</evidence>
<evidence type="ECO:0007829" key="36">
    <source>
        <dbReference type="PDB" id="6KDT"/>
    </source>
</evidence>
<evidence type="ECO:0007829" key="37">
    <source>
        <dbReference type="PDB" id="6R3E"/>
    </source>
</evidence>
<evidence type="ECO:0007829" key="38">
    <source>
        <dbReference type="PDB" id="6U8W"/>
    </source>
</evidence>
<evidence type="ECO:0007829" key="39">
    <source>
        <dbReference type="PDB" id="7O45"/>
    </source>
</evidence>
<evidence type="ECO:0007829" key="40">
    <source>
        <dbReference type="PDB" id="8EIH"/>
    </source>
</evidence>
<name>DNM3B_HUMAN</name>
<keyword id="KW-0002">3D-structure</keyword>
<keyword id="KW-0010">Activator</keyword>
<keyword id="KW-0025">Alternative splicing</keyword>
<keyword id="KW-0164">Citrullination</keyword>
<keyword id="KW-0225">Disease variant</keyword>
<keyword id="KW-0238">DNA-binding</keyword>
<keyword id="KW-1017">Isopeptide bond</keyword>
<keyword id="KW-0479">Metal-binding</keyword>
<keyword id="KW-0489">Methyltransferase</keyword>
<keyword id="KW-0539">Nucleus</keyword>
<keyword id="KW-0597">Phosphoprotein</keyword>
<keyword id="KW-1267">Proteomics identification</keyword>
<keyword id="KW-1185">Reference proteome</keyword>
<keyword id="KW-0678">Repressor</keyword>
<keyword id="KW-0949">S-adenosyl-L-methionine</keyword>
<keyword id="KW-0808">Transferase</keyword>
<keyword id="KW-0832">Ubl conjugation</keyword>
<keyword id="KW-0862">Zinc</keyword>
<keyword id="KW-0863">Zinc-finger</keyword>
<comment type="function">
    <text evidence="1 15 17 18 19 21">Required for genome-wide de novo methylation and is essential for the establishment of DNA methylation patterns during development. DNA methylation is coordinated with methylation of histones. May preferentially methylates nucleosomal DNA within the nucleosome core region. May function as transcriptional co-repressor by associating with CBX4 and independently of DNA methylation. Seems to be involved in gene silencing (By similarity). In association with DNMT1 and via the recruitment of CTCFL/BORIS, involved in activation of BAG1 gene expression by modulating dimethylation of promoter histone H3 at H3K4 and H3K9. Isoforms 4 and 5 are probably not functional due to the deletion of two conserved methyltransferase motifs. Functions as a transcriptional corepressor by associating with ZHX1. Required for DUX4 silencing in somatic cells (PubMed:27153398).</text>
</comment>
<comment type="catalytic activity">
    <reaction evidence="6">
        <text>a 2'-deoxycytidine in DNA + S-adenosyl-L-methionine = a 5-methyl-2'-deoxycytidine in DNA + S-adenosyl-L-homocysteine + H(+)</text>
        <dbReference type="Rhea" id="RHEA:13681"/>
        <dbReference type="Rhea" id="RHEA-COMP:11369"/>
        <dbReference type="Rhea" id="RHEA-COMP:11370"/>
        <dbReference type="ChEBI" id="CHEBI:15378"/>
        <dbReference type="ChEBI" id="CHEBI:57856"/>
        <dbReference type="ChEBI" id="CHEBI:59789"/>
        <dbReference type="ChEBI" id="CHEBI:85452"/>
        <dbReference type="ChEBI" id="CHEBI:85454"/>
        <dbReference type="EC" id="2.1.1.37"/>
    </reaction>
</comment>
<comment type="activity regulation">
    <text evidence="1">Activated by binding to the regulatory factor DNMT3L.</text>
</comment>
<comment type="subunit">
    <text evidence="1 12 13 15 16 17">Interacts with BAZ2A/TIP5, SUV39H1 and CBX4. Interacts with UHRF1 (By similarity). Interacts with DNMT1 and DNMT3A, SETDB1, UBL1, UBE2I9 and ZHX1. Interacts with the PRC2/EED-EZH2 complex.</text>
</comment>
<comment type="interaction">
    <interactant intactId="EBI-80125">
        <id>Q9UBC3</id>
    </interactant>
    <interactant intactId="EBI-923653">
        <id>Q9Y6K1</id>
        <label>DNMT3A</label>
    </interactant>
    <organismsDiffer>false</organismsDiffer>
    <experiments>4</experiments>
</comment>
<comment type="interaction">
    <interactant intactId="EBI-80125">
        <id>Q9UBC3</id>
    </interactant>
    <interactant intactId="EBI-923794">
        <id>O75530</id>
        <label>EED</label>
    </interactant>
    <organismsDiffer>false</organismsDiffer>
    <experiments>4</experiments>
</comment>
<comment type="interaction">
    <interactant intactId="EBI-80125">
        <id>Q9UBC3</id>
    </interactant>
    <interactant intactId="EBI-744366">
        <id>Q96KQ7</id>
        <label>EHMT2</label>
    </interactant>
    <organismsDiffer>false</organismsDiffer>
    <experiments>2</experiments>
</comment>
<comment type="interaction">
    <interactant intactId="EBI-80125">
        <id>Q9UBC3</id>
    </interactant>
    <interactant intactId="EBI-530054">
        <id>Q15910</id>
        <label>EZH2</label>
    </interactant>
    <organismsDiffer>false</organismsDiffer>
    <experiments>14</experiments>
</comment>
<comment type="interaction">
    <interactant intactId="EBI-80125">
        <id>Q9UBC3</id>
    </interactant>
    <interactant intactId="EBI-80140">
        <id>P63165</id>
        <label>SUMO1</label>
    </interactant>
    <organismsDiffer>false</organismsDiffer>
    <experiments>4</experiments>
</comment>
<comment type="interaction">
    <interactant intactId="EBI-80125">
        <id>Q9UBC3</id>
    </interactant>
    <interactant intactId="EBI-80168">
        <id>P63279</id>
        <label>UBE2I</label>
    </interactant>
    <organismsDiffer>false</organismsDiffer>
    <experiments>3</experiments>
</comment>
<comment type="interaction">
    <interactant intactId="EBI-80125">
        <id>Q9UBC3</id>
    </interactant>
    <interactant intactId="EBI-1548946">
        <id>Q96T88</id>
        <label>UHRF1</label>
    </interactant>
    <organismsDiffer>false</organismsDiffer>
    <experiments>7</experiments>
</comment>
<comment type="interaction">
    <interactant intactId="EBI-80125">
        <id>Q9UBC3</id>
    </interactant>
    <interactant intactId="EBI-15602554">
        <id>Q9QR71</id>
        <label>LANA1</label>
    </interactant>
    <organismsDiffer>true</organismsDiffer>
    <experiments>2</experiments>
</comment>
<comment type="interaction">
    <interactant intactId="EBI-6083193">
        <id>Q9UBC3-1</id>
    </interactant>
    <interactant intactId="EBI-347767">
        <id>Q9UKY1</id>
        <label>ZHX1</label>
    </interactant>
    <organismsDiffer>false</organismsDiffer>
    <experiments>6</experiments>
</comment>
<comment type="subcellular location">
    <subcellularLocation>
        <location evidence="12 13">Nucleus</location>
    </subcellularLocation>
</comment>
<comment type="alternative products">
    <event type="alternative splicing"/>
    <isoform>
        <id>Q9UBC3-1</id>
        <name>1</name>
        <sequence type="displayed"/>
    </isoform>
    <isoform>
        <id>Q9UBC3-2</id>
        <name>2</name>
        <sequence type="described" ref="VSP_005637"/>
    </isoform>
    <isoform>
        <id>Q9UBC3-3</id>
        <name>3</name>
        <sequence type="described" ref="VSP_005637 VSP_005638"/>
    </isoform>
    <isoform>
        <id>Q9UBC3-4</id>
        <name>4</name>
        <sequence type="described" ref="VSP_005637 VSP_005639 VSP_005640"/>
    </isoform>
    <isoform>
        <id>Q9UBC3-5</id>
        <name>5</name>
        <sequence type="described" ref="VSP_005637 VSP_005641"/>
    </isoform>
    <isoform>
        <id>Q9UBC3-6</id>
        <name>6</name>
        <sequence type="described" ref="VSP_005636 VSP_005637"/>
    </isoform>
    <isoform>
        <id>Q9UBC3-7</id>
        <name>7</name>
        <sequence type="described" ref="VSP_045874 VSP_005637 VSP_045876"/>
    </isoform>
    <isoform>
        <id>Q9UBC3-8</id>
        <name>8</name>
        <sequence type="described" ref="VSP_045875 VSP_005637 VSP_045876"/>
    </isoform>
</comment>
<comment type="tissue specificity">
    <text>Ubiquitous; highly expressed in fetal liver, heart, kidney, placenta, and at lower levels in spleen, colon, brain, liver, small intestine, lung, peripheral blood mononuclear cells, and skeletal muscle. Isoform 1 is expressed in all tissues except brain, skeletal muscle and PBMC, 3 is ubiquitous, 4 is expressed in all tissues except brain, skeletal muscle, lung and prostate and 5 is detectable only in testis and at very low level in brain and prostate.</text>
</comment>
<comment type="domain">
    <text>The PWWP domain is essential for targeting to pericentric heterochromatin.</text>
</comment>
<comment type="PTM">
    <text evidence="12">Sumoylated.</text>
</comment>
<comment type="PTM">
    <text evidence="1">Citrullinated by PADI4.</text>
</comment>
<comment type="disease" evidence="8 9 10 11 14 20 22">
    <disease id="DI-01813">
        <name>Immunodeficiency-centromeric instability-facial anomalies syndrome 1</name>
        <acronym>ICF1</acronym>
        <description>A rare disorder characterized by a variable immunodeficiency resulting in recurrent infections, facial anomalies, and branching of chromosomes 1, 9, and 16. Other variable symptoms include growth retardation, failure to thrive, and psychomotor retardation. Laboratory studies show limited hypomethylation of DNA in a small fraction of the genome in some, but not all, patients.</description>
        <dbReference type="MIM" id="242860"/>
    </disease>
    <text>The disease is caused by variants affecting the gene represented in this entry.</text>
</comment>
<comment type="disease" evidence="21">
    <disease id="DI-06197">
        <name>Facioscapulohumeral muscular dystrophy 4, digenic</name>
        <acronym>FSHD4</acronym>
        <description>A digenic form of facioscapulohumeral muscular dystrophy, a degenerative muscle disease characterized by slowly progressive weakness of the muscles of the face, upper-arm, and shoulder girdle. With disease progression, other muscles may also become affected. There is significant clinical variability and incomplete penetrance.</description>
        <dbReference type="MIM" id="619478"/>
    </disease>
    <text evidence="21">The disease is caused by variants affecting distinct genetic loci, including the gene represented in this entry. DNMT3B mutations lead to DUX4 expression in somatic tissues, including muscle cells, when a haplotype on chromosome 4 is permissive for DUX4 expression. Ectopic expression of DUX4 in skeletal muscle activates the expression of stem cell and germline genes, and, when overexpressed in somatic cells, DUX4 can ultimately lead to cell death.</text>
</comment>
<comment type="similarity">
    <text evidence="5">Belongs to the class I-like SAM-binding methyltransferase superfamily. C5-methyltransferase family.</text>
</comment>
<comment type="online information" name="DNMT3Bbase">
    <link uri="https://databases.lovd.nl/shared/genes/DNMT3B"/>
    <text>DNMT3B mutation db</text>
</comment>
<accession>Q9UBC3</accession>
<accession>A2A2E2</accession>
<accession>B4DSM8</accession>
<accession>B4DSU1</accession>
<accession>E1P5M6</accession>
<accession>E1P5M7</accession>
<accession>E7EN63</accession>
<accession>E9PBF2</accession>
<accession>Q9UBD4</accession>
<accession>Q9UJQ5</accession>
<accession>Q9UKA6</accession>
<accession>Q9UNE5</accession>
<accession>Q9Y5R9</accession>
<accession>Q9Y5S0</accession>
<sequence>MKGDTRHLNGEEDAGGREDSILVNGACSDQSSDSPPILEAIRTPEIRGRRSSSRLSKREVSSLLSYTQDLTGDGDGEDGDGSDTPVMPKLFRETRTRSESPAVRTRNNNSVSSRERHRPSPRSTRGRQGRNHVDESPVEFPATRSLRRRATASAGTPWPSPPSSYLTIDLTDDTEDTHGTPQSSSTPYARLAQDSQQGGMESPQVEADSGDGDSSEYQDGKEFGIGDLVWGKIKGFSWWPAMVVSWKATSKRQAMSGMRWVQWFGDGKFSEVSADKLVALGLFSQHFNLATFNKLVSYRKAMYHALEKARVRAGKTFPSSPGDSLEDQLKPMLEWAHGGFKPTGIEGLKPNNTQPVVNKSKVRRAGSRKLESRKYENKTRRRTADDSATSDYCPAPKRLKTNCYNNGKDRGDEDQSREQMASDVANNKSSLEDGCLSCGRKNPVSFHPLFEGGLCQTCRDRFLELFYMYDDDGYQSYCTVCCEGRELLLCSNTSCCRCFCVECLEVLVGTGTAAEAKLQEPWSCYMCLPQRCHGVLRRRKDWNVRLQAFFTSDTGLEYEAPKLYPAIPAARRRPIRVLSLFDGIATGYLVLKELGIKVGKYVASEVCEESIAVGTVKHEGNIKYVNDVRNITKKNIEEWGPFDLVIGGSPCNDLSNVNPARKGLYEGTGRLFFEFYHLLNYSRPKEGDDRPFFWMFENVVAMKVGDKRDISRFLECNPVMIDAIKVSAAHRARYFWGNLPGMNRPVIASKNDKLELQDCLEYNRIAKLKKVQTITTKSNSIKQGKNQLFPVVMNGKEDVLWCTELERIFGFPVHYTDVSNMGRGARQKLLGRSWSVPVIRHLFAPLKDYFACE</sequence>